<accession>P04191</accession>
<accession>P11719</accession>
<name>AT2A1_RABIT</name>
<reference key="1">
    <citation type="journal article" date="1986" name="Cell">
        <title>Two Ca2+ ATPase genes: homologies and mechanistic implications of deduced amino acid sequences.</title>
        <authorList>
            <person name="Brandl C.J."/>
            <person name="Green N.M."/>
            <person name="Korczak B."/>
            <person name="McLennan D.H."/>
        </authorList>
    </citation>
    <scope>NUCLEOTIDE SEQUENCE [MRNA] (ISOFORM SERCA1B)</scope>
    <scope>TISSUE SPECIFICITY</scope>
</reference>
<reference key="2">
    <citation type="journal article" date="1996" name="Biochem. J.">
        <title>Involvement of an arginyl residue in the nucleotide-binding site of Ca(2+)-ATPase from sarcoplasmic reticulum as seen by reaction with phenylglyoxal.</title>
        <authorList>
            <person name="Corbalan-Garcia S."/>
            <person name="Teruel J.A."/>
            <person name="Gomez-Fernandez J.C."/>
        </authorList>
    </citation>
    <scope>PROTEIN SEQUENCE OF 134-140 AND 490-495</scope>
</reference>
<reference key="3">
    <citation type="journal article" date="1986" name="J. Membr. Biol.">
        <title>Localization of E1-E2 conformational transitions of sarcoplasmic reticulum Ca-ATPase by tryptic cleavage and hydrophobic labeling.</title>
        <authorList>
            <person name="Andersen J.P."/>
            <person name="Vilsen B."/>
            <person name="Collins J.H."/>
            <person name="Jorgensen P.L."/>
        </authorList>
    </citation>
    <scope>PROTEIN SEQUENCE OF 199-212; 335-348 AND 506-519</scope>
</reference>
<reference key="4">
    <citation type="journal article" date="1993" name="Biochim. Biophys. Acta">
        <title>Chemical modification of the Ca(2+)-ATPase of rabbit skeletal muscle sarcoplasmic reticulum: identification of sites labeled with aryl isothiocyanates and thiol-directed conformational probes.</title>
        <authorList>
            <person name="Wawrzynow A."/>
            <person name="Collins J.H."/>
        </authorList>
    </citation>
    <scope>PROTEIN SEQUENCE OF 335-365; 468-476; 493-502; 513-529; 606-615; 630-637 AND 668-671</scope>
</reference>
<reference key="5">
    <citation type="journal article" date="1994" name="Biochemistry">
        <title>Interaction of 4-azido-2-nitrophenyl phosphate, a pseudosubstrate, with the sarcoplasmic reticulum Ca-ATPase.</title>
        <authorList>
            <person name="Lacapere J.J."/>
            <person name="Garin J."/>
        </authorList>
    </citation>
    <scope>PROTEIN SEQUENCE OF 506-513 AND 584-591</scope>
    <scope>SUBCELLULAR LOCATION</scope>
    <scope>CATALYTIC ACTIVITY</scope>
</reference>
<reference key="6">
    <citation type="journal article" date="1987" name="J. Biol. Chem.">
        <title>Adult forms of the Ca2+ATPase of sarcoplasmic reticulum. Expression in developing skeletal muscle.</title>
        <authorList>
            <person name="Brandl C.J."/>
            <person name="Deleon S."/>
            <person name="Martin D.R."/>
            <person name="McLennan D.H."/>
        </authorList>
    </citation>
    <scope>NUCLEOTIDE SEQUENCE [MRNA] OF 973-1001 (ISOFORMS SERCA1A AND SERCA1B)</scope>
    <scope>TISSUE SPECIFICITY</scope>
    <scope>DEVELOPMENTAL STAGE</scope>
</reference>
<reference key="7">
    <citation type="journal article" date="1993" name="J. Biol. Chem.">
        <title>Identification of regions in the Ca(2+)-ATPase of sarcoplasmic reticulum that affect functional association with phospholamban.</title>
        <authorList>
            <person name="Toyofuku T."/>
            <person name="Kurzydlowski K."/>
            <person name="Tada M."/>
            <person name="McLennan D.H."/>
        </authorList>
    </citation>
    <scope>INTERACTION WITH PHOSPHOLAMBAN</scope>
    <scope>ACTIVITY REGULATION</scope>
</reference>
<reference key="8">
    <citation type="journal article" date="1999" name="J. Biol. Chem.">
        <title>Transmembrane helix M6 in sarco(endo)plasmic reticulum Ca(2+)-ATPase forms a functional interaction site with phospholamban. Evidence for physical interactions at other sites.</title>
        <authorList>
            <person name="Asahi M."/>
            <person name="Kimura Y."/>
            <person name="Kurzydlowski K."/>
            <person name="Tada M."/>
            <person name="McLennan D.H."/>
        </authorList>
    </citation>
    <scope>INTERACTION WITH PHOSPHOLAMBAN</scope>
    <scope>ACTIVITY REGULATION</scope>
</reference>
<reference key="9">
    <citation type="journal article" date="2000" name="Hum. Genet.">
        <title>The mutation of Pro(789) to Leu reduces the activity of the fast-twitch skeletal muscle sarco(endo)plasmic reticulum Ca(2+) ATPase (SERCA1) and is associated with Brody disease.</title>
        <authorList>
            <person name="Odermatt A."/>
            <person name="Barton K."/>
            <person name="Khanna V.K."/>
            <person name="Mathieu J."/>
            <person name="Escolar D."/>
            <person name="Kuntzer T."/>
            <person name="Karpati G."/>
            <person name="MacLennan D.H."/>
        </authorList>
    </citation>
    <scope>FUNCTION</scope>
    <scope>CATALYTIC ACTIVITY</scope>
    <scope>MUTAGENESIS OF PRO-789</scope>
</reference>
<reference key="10">
    <citation type="journal article" date="2001" name="J. Biol. Chem.">
        <title>Mutations of either or both Cys876 and Cys888 residues of sarcoplasmic reticulum Ca2+-ATPase result in a complete loss of Ca2+ transport activity without a loss of Ca2+-dependent ATPase activity. Role of the Cys876-Cys888 disulfide bond.</title>
        <authorList>
            <person name="Daiho T."/>
            <person name="Yamasaki K."/>
            <person name="Saino T."/>
            <person name="Kamidochi M."/>
            <person name="Satoh K."/>
            <person name="Iizuka H."/>
            <person name="Suzuki H."/>
        </authorList>
    </citation>
    <scope>FUNCTION</scope>
    <scope>CATALYTIC ACTIVITY</scope>
    <scope>SUBCELLULAR LOCATION</scope>
    <scope>TISSUE SPECIFICITY</scope>
    <scope>PARTIAL PROTEIN SEQUENCE</scope>
    <scope>MUTAGENESIS OF CYS-876 AND CYS-888</scope>
    <scope>DISULFIDE BOND</scope>
</reference>
<reference key="11">
    <citation type="journal article" date="2003" name="Biochem. J.">
        <title>Sarco/endoplasmic-reticulum calcium ATPase SERCA1 is maintained in the endoplasmic reticulum by a retrieval signal located between residues 1 and 211.</title>
        <authorList>
            <person name="Newton T."/>
            <person name="Black J.P."/>
            <person name="Butler J."/>
            <person name="Lee A.G."/>
            <person name="Chad J."/>
            <person name="East J.M."/>
        </authorList>
    </citation>
    <scope>SUBCELLULAR LOCATION</scope>
</reference>
<reference key="12">
    <citation type="journal article" date="2004" name="Biophys. J.">
        <title>Time-resolved charge translocation by sarcoplasmic reticulum Ca-ATPase measured on a solid supported membrane.</title>
        <authorList>
            <person name="Tadini Buoninsegni F."/>
            <person name="Bartolommei G."/>
            <person name="Moncelli M.R."/>
            <person name="Inesi G."/>
            <person name="Guidelli R."/>
        </authorList>
    </citation>
    <scope>FUNCTION</scope>
    <scope>CATALYTIC ACTIVITY</scope>
    <scope>ACTIVITY REGULATION</scope>
    <scope>SUBCELLULAR LOCATION</scope>
    <scope>TISSUE SPECIFICITY</scope>
</reference>
<reference key="13">
    <citation type="journal article" date="2017" name="J. Biol. Chem.">
        <title>Conformational memory in the association of the transmembrane protein phospholamban with the sarcoplasmic reticulum calcium pump SERCA.</title>
        <authorList>
            <person name="Smeazzetto S."/>
            <person name="Armanious G.P."/>
            <person name="Moncelli M.R."/>
            <person name="Bak J.J."/>
            <person name="Lemieux M.J."/>
            <person name="Young H.S."/>
            <person name="Tadini-Buoninsegni F."/>
        </authorList>
    </citation>
    <scope>FUNCTION</scope>
    <scope>CATALYTIC ACTIVITY</scope>
    <scope>INTERACTION WITH PLN AND SLN</scope>
    <scope>TISSUE SPECIFICITY</scope>
    <scope>SUBCELLULAR LOCATION</scope>
</reference>
<reference evidence="33" key="14">
    <citation type="journal article" date="2000" name="Nature">
        <title>Crystal structure of the calcium pump of sarcoplasmic reticulum at 2.6 A resolution.</title>
        <authorList>
            <person name="Toyoshima C."/>
            <person name="Nakasako M."/>
            <person name="Nomura H."/>
            <person name="Ogawa H."/>
        </authorList>
    </citation>
    <scope>X-RAY CRYSTALLOGRAPHY (2.40 ANGSTROMS) OF 1-993 IN COMPLEXES WITH CALCIUM AND ATP ANALOG</scope>
    <scope>TOPOLOGY</scope>
    <scope>DISULFIDE BONDS</scope>
    <scope>ACTIVE SITE</scope>
    <scope>TISSUE SPECIFICITY</scope>
</reference>
<reference evidence="32" key="15">
    <citation type="journal article" date="2002" name="Nature">
        <title>Structural changes in the calcium pump accompanying the dissociation of calcium.</title>
        <authorList>
            <person name="Toyoshima C."/>
            <person name="Nomura H."/>
        </authorList>
    </citation>
    <scope>X-RAY CRYSTALLOGRAPHY (3.10 ANGSTROMS) OF 1-993</scope>
    <scope>TOPOLOGY</scope>
    <scope>DOMAIN</scope>
    <scope>DISULFIDE BONDS</scope>
</reference>
<reference evidence="36" key="16">
    <citation type="journal article" date="2004" name="Nature">
        <title>Crystal structure of the calcium pump with a bound ATP analogue.</title>
        <authorList>
            <person name="Toyoshima C."/>
            <person name="Mizutani T."/>
        </authorList>
    </citation>
    <scope>X-RAY CRYSTALLOGRAPHY (2.90 ANGSTROMS) OF 1-993 IN COMPLEX WITH ATP ANALOG; CALCIUM AND MAGNESIUM</scope>
    <scope>COFACTOR</scope>
    <scope>DOMAIN</scope>
    <scope>TOPOLOGY</scope>
    <scope>DISULFIDE BONDS</scope>
</reference>
<reference evidence="37 51" key="17">
    <citation type="journal article" date="2004" name="Nature">
        <title>Lumenal gating mechanism revealed in calcium pump crystal structures with phosphate analogues.</title>
        <authorList>
            <person name="Toyoshima C."/>
            <person name="Nomura H."/>
            <person name="Tsuda T."/>
        </authorList>
    </citation>
    <scope>X-RAY CRYSTALLOGRAPHY (2.30 ANGSTROMS) OF 1-993 IN COMPLEX WITH ADP; CALCIUM AND MAGNESIUM</scope>
    <scope>COFACTOR</scope>
    <scope>DOMAIN</scope>
    <scope>DISULFIDE BONDS</scope>
</reference>
<reference evidence="34 35" key="18">
    <citation type="journal article" date="2004" name="Science">
        <title>Phosphoryl transfer and calcium ion occlusion in the calcium pump.</title>
        <authorList>
            <person name="Sorensen T.L."/>
            <person name="Moller J.V."/>
            <person name="Nissen P."/>
        </authorList>
    </citation>
    <scope>X-RAY CRYSTALLOGRAPHY (2.60 ANGSTROMS) OF 1-993 IN COMPLEX WITH ADP; ATP ANALOG; CALCIUM AND MAGNESIUM</scope>
    <scope>COFACTOR</scope>
    <scope>TOPOLOGY</scope>
    <scope>DOMAIN</scope>
</reference>
<reference evidence="38" key="19">
    <citation type="journal article" date="2004" name="Science">
        <title>Dephosphorylation of the calcium pump coupled to counterion occlusion.</title>
        <authorList>
            <person name="Olesen C."/>
            <person name="Sorensen T.L."/>
            <person name="Nielsen R.C."/>
            <person name="Moller J.V."/>
            <person name="Nissen P."/>
        </authorList>
    </citation>
    <scope>X-RAY CRYSTALLOGRAPHY (3.00 ANGSTROMS) OF 1-993 IN COMPLEX WITH MAGNESIUM AND TRANSITION STATE ANALOG</scope>
    <scope>COFACTOR</scope>
    <scope>DOMAIN</scope>
</reference>
<reference evidence="41 42 43 44" key="20">
    <citation type="journal article" date="2006" name="EMBO J.">
        <title>Modulatory and catalytic modes of ATP binding by the calcium pump.</title>
        <authorList>
            <person name="Jensen A.M."/>
            <person name="Sorensen T.L."/>
            <person name="Olesen C."/>
            <person name="Moller J.V."/>
            <person name="Nissen P."/>
        </authorList>
    </citation>
    <scope>X-RAY CRYSTALLOGRAPHY (2.80 ANGSTROMS) OF 1-993 IN COMPLEX WITH ATP ANALOG AND CALCIUM</scope>
    <scope>DOMAIN</scope>
    <scope>DISULFIDE BONDS</scope>
</reference>
<reference evidence="63 64 65" key="21">
    <citation type="journal article" date="2007" name="Nature">
        <title>The structural basis of calcium transport by the calcium pump.</title>
        <authorList>
            <person name="Olesen C."/>
            <person name="Picard M."/>
            <person name="Winther A.M."/>
            <person name="Gyrup C."/>
            <person name="Morth J.P."/>
            <person name="Oxvig C."/>
            <person name="Moller J.V."/>
            <person name="Nissen P."/>
        </authorList>
    </citation>
    <scope>X-RAY CRYSTALLOGRAPHY (2.65 ANGSTROMS) OF 1-993 IN COMPLEX WITH ATP ANALOG; CALCIUM AND MAGNESIUM</scope>
    <scope>FUNCTION</scope>
    <scope>CATALYTIC ACTIVITY</scope>
    <scope>COFACTOR</scope>
    <scope>IDENTIFICATION BY MASS SPECTROMETRY</scope>
    <scope>ACTIVE SITE</scope>
    <scope>SUBCELLULAR LOCATION</scope>
    <scope>TOPOLOGY</scope>
    <scope>DOMAIN</scope>
    <scope>TISSUE SPECIFICITY</scope>
    <scope>DISULFIDE BONDS</scope>
</reference>
<reference evidence="80" key="22">
    <citation type="journal article" date="2013" name="EMBO J.">
        <title>SERCA mutant E309Q binds two Ca(2+) ions but adopts a catalytically incompetent conformation.</title>
        <authorList>
            <person name="Clausen J.D."/>
            <person name="Bublitz M."/>
            <person name="Arnou B."/>
            <person name="Montigny C."/>
            <person name="Jaxel C."/>
            <person name="Moller J.V."/>
            <person name="Nissen P."/>
            <person name="Andersen J.P."/>
            <person name="le Maire M."/>
        </authorList>
    </citation>
    <scope>X-RAY CRYSTALLOGRAPHY (3.50 ANGSTROMS) OF 1-993 OF MUTANT GLN-309 IN COMPLEX WITH CALCIUM</scope>
    <scope>FUNCTION</scope>
    <scope>DOMAIN</scope>
    <scope>DISULFIDE BONDS</scope>
    <scope>MUTAGENESIS OF GLU-309</scope>
</reference>
<reference evidence="79 84" key="23">
    <citation type="journal article" date="2013" name="J. Biol. Chem.">
        <title>The structural basis for phospholamban inhibition of the calcium pump in sarcoplasmic reticulum.</title>
        <authorList>
            <person name="Akin B.L."/>
            <person name="Hurley T.D."/>
            <person name="Chen Z."/>
            <person name="Jones L.R."/>
        </authorList>
    </citation>
    <scope>X-RAY CRYSTALLOGRAPHY (2.83 ANGSTROMS) OF 1-993 IN COMPLEX WITH DOG PLN</scope>
    <scope>FUNCTION</scope>
    <scope>CATALYTIC ACTIVITY</scope>
    <scope>ACTIVITY REGULATION</scope>
    <scope>SUBCELLULAR LOCATION</scope>
    <scope>TISSUE SPECIFICITY</scope>
    <scope>DISULFIDE BONDS</scope>
    <scope>DOMAIN</scope>
</reference>
<reference evidence="72 73 74 75" key="24">
    <citation type="journal article" date="2013" name="Nature">
        <title>Crystal structures of the calcium pump and sarcolipin in the Mg2+-bound E1 state.</title>
        <authorList>
            <person name="Toyoshima C."/>
            <person name="Iwasawa S."/>
            <person name="Ogawa H."/>
            <person name="Hirata A."/>
            <person name="Tsueda J."/>
            <person name="Inesi G."/>
        </authorList>
    </citation>
    <scope>X-RAY CRYSTALLOGRAPHY (2.45 ANGSTROMS) OF 1-993 IN COMPLEX WITH SLN AND MAGNESIUM</scope>
    <scope>SUBCELLULAR LOCATION</scope>
    <scope>TISSUE SPECIFICITY</scope>
    <scope>TOPOLOGY</scope>
    <scope>DOMAIN</scope>
    <scope>DISULFIDE BONDS</scope>
</reference>
<reference evidence="77" key="25">
    <citation type="journal article" date="2013" name="Nature">
        <title>The sarcolipin-bound calcium pump stabilizes calcium sites exposed to the cytoplasm.</title>
        <authorList>
            <person name="Winther A.M."/>
            <person name="Bublitz M."/>
            <person name="Karlsen J.L."/>
            <person name="Moller J.V."/>
            <person name="Hansen J.B."/>
            <person name="Nissen P."/>
            <person name="Buch-Pedersen M.J."/>
        </authorList>
    </citation>
    <scope>X-RAY CRYSTALLOGRAPHY (3.10 ANGSTROMS) OF 1-993 IN COMPLEX WITH SLN; ATP ANALOG AND MAGNESIUM</scope>
    <scope>COFACTOR</scope>
    <scope>DOMAIN</scope>
</reference>
<reference evidence="83" key="26">
    <citation type="journal article" date="2015" name="IUCrJ">
        <title>Structural studies of P-type ATPase-ligand complexes using an X-ray free-electron laser.</title>
        <authorList>
            <person name="Bublitz M."/>
            <person name="Nass K."/>
            <person name="Drachmann N.D."/>
            <person name="Markvardsen A.J."/>
            <person name="Gutmann M.J."/>
            <person name="Barends T.R."/>
            <person name="Mattle D."/>
            <person name="Shoeman R.L."/>
            <person name="Doak R.B."/>
            <person name="Boutet S."/>
            <person name="Messerschmidt M."/>
            <person name="Seibert M.M."/>
            <person name="Williams G.J."/>
            <person name="Foucar L."/>
            <person name="Reinhard L."/>
            <person name="Sitsel O."/>
            <person name="Gregersen J.L."/>
            <person name="Clausen J.D."/>
            <person name="Boesen T."/>
            <person name="Gotfryd K."/>
            <person name="Wang K.T."/>
            <person name="Olesen C."/>
            <person name="Moller J.V."/>
            <person name="Nissen P."/>
            <person name="Schlichting I."/>
        </authorList>
    </citation>
    <scope>X-RAY CRYSTALLOGRAPHY (2.80 ANGSTROMS) OF 1-993 IN COMPLEX WITH ATP ANALOG AND CALCIUM</scope>
    <scope>TOPOLOGY</scope>
</reference>
<reference evidence="91 92 93 94 95" key="27">
    <citation type="journal article" date="2017" name="Nature">
        <title>Protein-phospholipid interplay revealed with crystals of a calcium pump.</title>
        <authorList>
            <person name="Norimatsu Y."/>
            <person name="Hasegawa K."/>
            <person name="Shimizu N."/>
            <person name="Toyoshima C."/>
        </authorList>
    </citation>
    <scope>X-RAY CRYSTALLOGRAPHY (3.20 ANGSTROMS) OF 1-993 IN COMPLEX WITH ADP AND CALCIUM</scope>
    <scope>TOPOLOGY</scope>
    <scope>DISULFIDE BONDS</scope>
    <scope>DOMAIN</scope>
</reference>
<reference evidence="96" key="28">
    <citation type="journal article" date="2018" name="Proc. Natl. Acad. Sci. U.S.A.">
        <title>Mechanism of the E2 to E1 transition in Ca2+ pump revealed by crystal structures of gating residue mutants.</title>
        <authorList>
            <person name="Tsunekawa N."/>
            <person name="Ogawa H."/>
            <person name="Tsueda J."/>
            <person name="Akiba T."/>
            <person name="Toyoshima C."/>
        </authorList>
    </citation>
    <scope>X-RAY CRYSTALLOGRAPHY (3.30 ANGSTROMS) OF 1-993 OF MUTANTS ALA/GLN-309</scope>
    <scope>DOMAIN</scope>
    <scope>DISULFIDE BONDS</scope>
    <scope>MUTAGENESIS OF GLU-309</scope>
</reference>
<dbReference type="EC" id="7.2.2.10" evidence="6 7 10 16 19 23 27"/>
<dbReference type="EMBL" id="M12898">
    <property type="protein sequence ID" value="AAA31165.1"/>
    <property type="molecule type" value="mRNA"/>
</dbReference>
<dbReference type="EMBL" id="M15351">
    <property type="protein sequence ID" value="AAA31166.1"/>
    <property type="molecule type" value="mRNA"/>
</dbReference>
<dbReference type="EMBL" id="M15158">
    <property type="protein sequence ID" value="AAA31167.1"/>
    <property type="molecule type" value="mRNA"/>
</dbReference>
<dbReference type="PIR" id="A01075">
    <property type="entry name" value="PWRBFC"/>
</dbReference>
<dbReference type="RefSeq" id="NP_001082787.1">
    <molecule id="P04191-1"/>
    <property type="nucleotide sequence ID" value="NM_001089318.1"/>
</dbReference>
<dbReference type="RefSeq" id="XP_069919846.1">
    <molecule id="P04191-2"/>
    <property type="nucleotide sequence ID" value="XM_070063745.1"/>
</dbReference>
<dbReference type="PDB" id="1IWO">
    <property type="method" value="X-ray"/>
    <property type="resolution" value="3.10 A"/>
    <property type="chains" value="A/B=1-994"/>
</dbReference>
<dbReference type="PDB" id="1KJU">
    <property type="method" value="EM"/>
    <property type="resolution" value="6.00 A"/>
    <property type="chains" value="A=1-994"/>
</dbReference>
<dbReference type="PDB" id="1SU4">
    <property type="method" value="X-ray"/>
    <property type="resolution" value="2.40 A"/>
    <property type="chains" value="A=1-994"/>
</dbReference>
<dbReference type="PDB" id="1T5S">
    <property type="method" value="X-ray"/>
    <property type="resolution" value="2.60 A"/>
    <property type="chains" value="A=1-993"/>
</dbReference>
<dbReference type="PDB" id="1T5T">
    <property type="method" value="X-ray"/>
    <property type="resolution" value="2.90 A"/>
    <property type="chains" value="A=1-993"/>
</dbReference>
<dbReference type="PDB" id="1VFP">
    <property type="method" value="X-ray"/>
    <property type="resolution" value="2.90 A"/>
    <property type="chains" value="A/B=1-994"/>
</dbReference>
<dbReference type="PDB" id="1WPG">
    <property type="method" value="X-ray"/>
    <property type="resolution" value="2.30 A"/>
    <property type="chains" value="A/B/C/D=1-993"/>
</dbReference>
<dbReference type="PDB" id="1XP5">
    <property type="method" value="X-ray"/>
    <property type="resolution" value="3.00 A"/>
    <property type="chains" value="A=1-993"/>
</dbReference>
<dbReference type="PDB" id="2AGV">
    <property type="method" value="X-ray"/>
    <property type="resolution" value="2.40 A"/>
    <property type="chains" value="A/B=1-993"/>
</dbReference>
<dbReference type="PDB" id="2BY4">
    <property type="method" value="X-ray"/>
    <property type="resolution" value="3.30 A"/>
    <property type="chains" value="A=1-993"/>
</dbReference>
<dbReference type="PDB" id="2C88">
    <property type="method" value="X-ray"/>
    <property type="resolution" value="3.10 A"/>
    <property type="chains" value="A=1-993"/>
</dbReference>
<dbReference type="PDB" id="2C8K">
    <property type="method" value="X-ray"/>
    <property type="resolution" value="2.80 A"/>
    <property type="chains" value="A=1-993"/>
</dbReference>
<dbReference type="PDB" id="2C8L">
    <property type="method" value="X-ray"/>
    <property type="resolution" value="3.10 A"/>
    <property type="chains" value="A=1-993"/>
</dbReference>
<dbReference type="PDB" id="2C9M">
    <property type="method" value="X-ray"/>
    <property type="resolution" value="3.00 A"/>
    <property type="chains" value="A/B=1-993"/>
</dbReference>
<dbReference type="PDB" id="2DQS">
    <property type="method" value="X-ray"/>
    <property type="resolution" value="2.50 A"/>
    <property type="chains" value="A=1-993"/>
</dbReference>
<dbReference type="PDB" id="2EAR">
    <property type="method" value="X-ray"/>
    <property type="resolution" value="3.10 A"/>
    <property type="chains" value="A=1-993"/>
</dbReference>
<dbReference type="PDB" id="2EAT">
    <property type="method" value="X-ray"/>
    <property type="resolution" value="2.90 A"/>
    <property type="chains" value="A=1-993"/>
</dbReference>
<dbReference type="PDB" id="2EAU">
    <property type="method" value="X-ray"/>
    <property type="resolution" value="2.80 A"/>
    <property type="chains" value="A=1-993"/>
</dbReference>
<dbReference type="PDB" id="2O9J">
    <property type="method" value="X-ray"/>
    <property type="resolution" value="2.65 A"/>
    <property type="chains" value="A=1-993"/>
</dbReference>
<dbReference type="PDB" id="2OA0">
    <property type="method" value="X-ray"/>
    <property type="resolution" value="3.40 A"/>
    <property type="chains" value="A=1-993"/>
</dbReference>
<dbReference type="PDB" id="2VOY">
    <property type="method" value="EM"/>
    <property type="resolution" value="18.00 A"/>
    <property type="chains" value="B=36-77, C=967-988, D=832-854, E=86-115, G=243-278, H=289-336, K=749-780, L=789-809"/>
</dbReference>
<dbReference type="PDB" id="2YFY">
    <property type="method" value="X-ray"/>
    <property type="resolution" value="3.10 A"/>
    <property type="chains" value="A=1-993"/>
</dbReference>
<dbReference type="PDB" id="2ZBD">
    <property type="method" value="X-ray"/>
    <property type="resolution" value="2.40 A"/>
    <property type="chains" value="A=1-993"/>
</dbReference>
<dbReference type="PDB" id="2ZBE">
    <property type="method" value="X-ray"/>
    <property type="resolution" value="3.80 A"/>
    <property type="chains" value="A/B=1-993"/>
</dbReference>
<dbReference type="PDB" id="2ZBF">
    <property type="method" value="X-ray"/>
    <property type="resolution" value="2.40 A"/>
    <property type="chains" value="A=1-993"/>
</dbReference>
<dbReference type="PDB" id="2ZBG">
    <property type="method" value="X-ray"/>
    <property type="resolution" value="2.55 A"/>
    <property type="chains" value="A=1-993"/>
</dbReference>
<dbReference type="PDB" id="3AR2">
    <property type="method" value="X-ray"/>
    <property type="resolution" value="2.50 A"/>
    <property type="chains" value="A=1-994"/>
</dbReference>
<dbReference type="PDB" id="3AR3">
    <property type="method" value="X-ray"/>
    <property type="resolution" value="2.30 A"/>
    <property type="chains" value="A=1-994"/>
</dbReference>
<dbReference type="PDB" id="3AR4">
    <property type="method" value="X-ray"/>
    <property type="resolution" value="2.15 A"/>
    <property type="chains" value="A=1-994"/>
</dbReference>
<dbReference type="PDB" id="3AR5">
    <property type="method" value="X-ray"/>
    <property type="resolution" value="2.20 A"/>
    <property type="chains" value="A=1-994"/>
</dbReference>
<dbReference type="PDB" id="3AR6">
    <property type="method" value="X-ray"/>
    <property type="resolution" value="2.20 A"/>
    <property type="chains" value="A=1-994"/>
</dbReference>
<dbReference type="PDB" id="3AR7">
    <property type="method" value="X-ray"/>
    <property type="resolution" value="2.15 A"/>
    <property type="chains" value="A=1-994"/>
</dbReference>
<dbReference type="PDB" id="3AR8">
    <property type="method" value="X-ray"/>
    <property type="resolution" value="2.60 A"/>
    <property type="chains" value="A=1-994"/>
</dbReference>
<dbReference type="PDB" id="3AR9">
    <property type="method" value="X-ray"/>
    <property type="resolution" value="2.60 A"/>
    <property type="chains" value="A=1-994"/>
</dbReference>
<dbReference type="PDB" id="3B9B">
    <property type="method" value="X-ray"/>
    <property type="resolution" value="2.65 A"/>
    <property type="chains" value="A=1-993"/>
</dbReference>
<dbReference type="PDB" id="3B9R">
    <property type="method" value="X-ray"/>
    <property type="resolution" value="3.00 A"/>
    <property type="chains" value="A/B=1-993"/>
</dbReference>
<dbReference type="PDB" id="3BA6">
    <property type="method" value="X-ray"/>
    <property type="resolution" value="2.80 A"/>
    <property type="chains" value="A=1-993"/>
</dbReference>
<dbReference type="PDB" id="3FGO">
    <property type="method" value="X-ray"/>
    <property type="resolution" value="2.50 A"/>
    <property type="chains" value="A/B=1-994"/>
</dbReference>
<dbReference type="PDB" id="3FPB">
    <property type="method" value="X-ray"/>
    <property type="resolution" value="2.55 A"/>
    <property type="chains" value="A=1-994"/>
</dbReference>
<dbReference type="PDB" id="3FPS">
    <property type="method" value="X-ray"/>
    <property type="resolution" value="3.20 A"/>
    <property type="chains" value="A=1-994"/>
</dbReference>
<dbReference type="PDB" id="3J7T">
    <property type="method" value="EM"/>
    <property type="resolution" value="3.40 A"/>
    <property type="chains" value="A=1-994"/>
</dbReference>
<dbReference type="PDB" id="3N5K">
    <property type="method" value="X-ray"/>
    <property type="resolution" value="2.20 A"/>
    <property type="chains" value="A/B=1-994"/>
</dbReference>
<dbReference type="PDB" id="3N8G">
    <property type="method" value="X-ray"/>
    <property type="resolution" value="2.58 A"/>
    <property type="chains" value="A=1-993"/>
</dbReference>
<dbReference type="PDB" id="3W5A">
    <property type="method" value="X-ray"/>
    <property type="resolution" value="3.01 A"/>
    <property type="chains" value="A/B=1-993"/>
</dbReference>
<dbReference type="PDB" id="3W5B">
    <property type="method" value="X-ray"/>
    <property type="resolution" value="3.20 A"/>
    <property type="chains" value="A=1-993"/>
</dbReference>
<dbReference type="PDB" id="3W5C">
    <property type="method" value="X-ray"/>
    <property type="resolution" value="2.50 A"/>
    <property type="chains" value="A=1-993"/>
</dbReference>
<dbReference type="PDB" id="3W5D">
    <property type="method" value="X-ray"/>
    <property type="resolution" value="2.45 A"/>
    <property type="chains" value="A=1-993"/>
</dbReference>
<dbReference type="PDB" id="4BEW">
    <property type="method" value="X-ray"/>
    <property type="resolution" value="2.50 A"/>
    <property type="chains" value="A/B=1-994"/>
</dbReference>
<dbReference type="PDB" id="4H1W">
    <property type="method" value="X-ray"/>
    <property type="resolution" value="3.10 A"/>
    <property type="chains" value="A=1-993"/>
</dbReference>
<dbReference type="PDB" id="4J2T">
    <property type="method" value="X-ray"/>
    <property type="resolution" value="3.20 A"/>
    <property type="chains" value="A=1-993"/>
</dbReference>
<dbReference type="PDB" id="4KYT">
    <property type="method" value="X-ray"/>
    <property type="resolution" value="2.83 A"/>
    <property type="chains" value="A=1-993"/>
</dbReference>
<dbReference type="PDB" id="4NAB">
    <property type="method" value="X-ray"/>
    <property type="resolution" value="3.50 A"/>
    <property type="chains" value="A=1-993"/>
</dbReference>
<dbReference type="PDB" id="4UU0">
    <property type="method" value="X-ray"/>
    <property type="resolution" value="2.50 A"/>
    <property type="chains" value="A=1-993"/>
</dbReference>
<dbReference type="PDB" id="4UU1">
    <property type="method" value="X-ray"/>
    <property type="resolution" value="2.80 A"/>
    <property type="chains" value="A=1-993"/>
</dbReference>
<dbReference type="PDB" id="4XOU">
    <property type="method" value="X-ray"/>
    <property type="resolution" value="2.80 A"/>
    <property type="chains" value="A=1-993"/>
</dbReference>
<dbReference type="PDB" id="4Y3U">
    <property type="method" value="X-ray"/>
    <property type="resolution" value="3.51 A"/>
    <property type="chains" value="A=1-993"/>
</dbReference>
<dbReference type="PDB" id="4YCL">
    <property type="method" value="X-ray"/>
    <property type="resolution" value="3.25 A"/>
    <property type="chains" value="A=1-993"/>
</dbReference>
<dbReference type="PDB" id="4YCM">
    <property type="method" value="X-ray"/>
    <property type="resolution" value="3.20 A"/>
    <property type="chains" value="A=2-993"/>
</dbReference>
<dbReference type="PDB" id="4YCN">
    <property type="method" value="X-ray"/>
    <property type="resolution" value="3.50 A"/>
    <property type="chains" value="A=2-993"/>
</dbReference>
<dbReference type="PDB" id="5A3Q">
    <property type="method" value="X-ray"/>
    <property type="resolution" value="3.05 A"/>
    <property type="chains" value="A=1-993"/>
</dbReference>
<dbReference type="PDB" id="5A3R">
    <property type="method" value="X-ray"/>
    <property type="resolution" value="3.05 A"/>
    <property type="chains" value="A=1-993"/>
</dbReference>
<dbReference type="PDB" id="5A3S">
    <property type="method" value="X-ray"/>
    <property type="resolution" value="3.30 A"/>
    <property type="chains" value="A/B=1-993"/>
</dbReference>
<dbReference type="PDB" id="5NCQ">
    <property type="method" value="X-ray"/>
    <property type="resolution" value="3.00 A"/>
    <property type="chains" value="A=1-993"/>
</dbReference>
<dbReference type="PDB" id="5XA7">
    <property type="method" value="X-ray"/>
    <property type="resolution" value="3.20 A"/>
    <property type="chains" value="A=1-993"/>
</dbReference>
<dbReference type="PDB" id="5XA8">
    <property type="method" value="X-ray"/>
    <property type="resolution" value="3.20 A"/>
    <property type="chains" value="A=1-993"/>
</dbReference>
<dbReference type="PDB" id="5XA9">
    <property type="method" value="X-ray"/>
    <property type="resolution" value="3.20 A"/>
    <property type="chains" value="A=1-993"/>
</dbReference>
<dbReference type="PDB" id="5XAA">
    <property type="method" value="X-ray"/>
    <property type="resolution" value="3.20 A"/>
    <property type="chains" value="A=1-993"/>
</dbReference>
<dbReference type="PDB" id="5XAB">
    <property type="method" value="X-ray"/>
    <property type="resolution" value="3.20 A"/>
    <property type="chains" value="A=1-993"/>
</dbReference>
<dbReference type="PDB" id="5ZMV">
    <property type="method" value="X-ray"/>
    <property type="resolution" value="3.30 A"/>
    <property type="chains" value="A=1-993"/>
</dbReference>
<dbReference type="PDB" id="5ZMW">
    <property type="method" value="X-ray"/>
    <property type="resolution" value="2.50 A"/>
    <property type="chains" value="A=1-993"/>
</dbReference>
<dbReference type="PDB" id="6HEF">
    <property type="method" value="X-ray"/>
    <property type="resolution" value="3.54 A"/>
    <property type="chains" value="A=1-993"/>
</dbReference>
<dbReference type="PDB" id="6RB2">
    <property type="method" value="X-ray"/>
    <property type="resolution" value="3.20 A"/>
    <property type="chains" value="A=1-993"/>
</dbReference>
<dbReference type="PDB" id="6YAA">
    <property type="method" value="X-ray"/>
    <property type="resolution" value="3.40 A"/>
    <property type="chains" value="A=1-993"/>
</dbReference>
<dbReference type="PDB" id="6YSO">
    <property type="method" value="X-ray"/>
    <property type="resolution" value="3.13 A"/>
    <property type="chains" value="A/B=1-993"/>
</dbReference>
<dbReference type="PDB" id="8OWA">
    <property type="method" value="X-ray"/>
    <property type="resolution" value="2.85 A"/>
    <property type="chains" value="A=1-991"/>
</dbReference>
<dbReference type="PDB" id="8OWL">
    <property type="method" value="X-ray"/>
    <property type="resolution" value="3.02 A"/>
    <property type="chains" value="A=1-991"/>
</dbReference>
<dbReference type="PDBsum" id="1IWO"/>
<dbReference type="PDBsum" id="1KJU"/>
<dbReference type="PDBsum" id="1SU4"/>
<dbReference type="PDBsum" id="1T5S"/>
<dbReference type="PDBsum" id="1T5T"/>
<dbReference type="PDBsum" id="1VFP"/>
<dbReference type="PDBsum" id="1WPG"/>
<dbReference type="PDBsum" id="1XP5"/>
<dbReference type="PDBsum" id="2AGV"/>
<dbReference type="PDBsum" id="2BY4"/>
<dbReference type="PDBsum" id="2C88"/>
<dbReference type="PDBsum" id="2C8K"/>
<dbReference type="PDBsum" id="2C8L"/>
<dbReference type="PDBsum" id="2C9M"/>
<dbReference type="PDBsum" id="2DQS"/>
<dbReference type="PDBsum" id="2EAR"/>
<dbReference type="PDBsum" id="2EAT"/>
<dbReference type="PDBsum" id="2EAU"/>
<dbReference type="PDBsum" id="2O9J"/>
<dbReference type="PDBsum" id="2OA0"/>
<dbReference type="PDBsum" id="2VOY"/>
<dbReference type="PDBsum" id="2YFY"/>
<dbReference type="PDBsum" id="2ZBD"/>
<dbReference type="PDBsum" id="2ZBE"/>
<dbReference type="PDBsum" id="2ZBF"/>
<dbReference type="PDBsum" id="2ZBG"/>
<dbReference type="PDBsum" id="3AR2"/>
<dbReference type="PDBsum" id="3AR3"/>
<dbReference type="PDBsum" id="3AR4"/>
<dbReference type="PDBsum" id="3AR5"/>
<dbReference type="PDBsum" id="3AR6"/>
<dbReference type="PDBsum" id="3AR7"/>
<dbReference type="PDBsum" id="3AR8"/>
<dbReference type="PDBsum" id="3AR9"/>
<dbReference type="PDBsum" id="3B9B"/>
<dbReference type="PDBsum" id="3B9R"/>
<dbReference type="PDBsum" id="3BA6"/>
<dbReference type="PDBsum" id="3FGO"/>
<dbReference type="PDBsum" id="3FPB"/>
<dbReference type="PDBsum" id="3FPS"/>
<dbReference type="PDBsum" id="3J7T"/>
<dbReference type="PDBsum" id="3N5K"/>
<dbReference type="PDBsum" id="3N8G"/>
<dbReference type="PDBsum" id="3W5A"/>
<dbReference type="PDBsum" id="3W5B"/>
<dbReference type="PDBsum" id="3W5C"/>
<dbReference type="PDBsum" id="3W5D"/>
<dbReference type="PDBsum" id="4BEW"/>
<dbReference type="PDBsum" id="4H1W"/>
<dbReference type="PDBsum" id="4J2T"/>
<dbReference type="PDBsum" id="4KYT"/>
<dbReference type="PDBsum" id="4NAB"/>
<dbReference type="PDBsum" id="4UU0"/>
<dbReference type="PDBsum" id="4UU1"/>
<dbReference type="PDBsum" id="4XOU"/>
<dbReference type="PDBsum" id="4Y3U"/>
<dbReference type="PDBsum" id="4YCL"/>
<dbReference type="PDBsum" id="4YCM"/>
<dbReference type="PDBsum" id="4YCN"/>
<dbReference type="PDBsum" id="5A3Q"/>
<dbReference type="PDBsum" id="5A3R"/>
<dbReference type="PDBsum" id="5A3S"/>
<dbReference type="PDBsum" id="5NCQ"/>
<dbReference type="PDBsum" id="5XA7"/>
<dbReference type="PDBsum" id="5XA8"/>
<dbReference type="PDBsum" id="5XA9"/>
<dbReference type="PDBsum" id="5XAA"/>
<dbReference type="PDBsum" id="5XAB"/>
<dbReference type="PDBsum" id="5ZMV"/>
<dbReference type="PDBsum" id="5ZMW"/>
<dbReference type="PDBsum" id="6HEF"/>
<dbReference type="PDBsum" id="6RB2"/>
<dbReference type="PDBsum" id="6YAA"/>
<dbReference type="PDBsum" id="6YSO"/>
<dbReference type="PDBsum" id="8OWA"/>
<dbReference type="PDBsum" id="8OWL"/>
<dbReference type="BMRB" id="P04191"/>
<dbReference type="PCDDB" id="P04191"/>
<dbReference type="SMR" id="P04191"/>
<dbReference type="FunCoup" id="P04191">
    <property type="interactions" value="63"/>
</dbReference>
<dbReference type="IntAct" id="P04191">
    <property type="interactions" value="4"/>
</dbReference>
<dbReference type="MINT" id="P04191"/>
<dbReference type="STRING" id="9986.ENSOCUP00000031198"/>
<dbReference type="BindingDB" id="P04191"/>
<dbReference type="ChEMBL" id="CHEMBL4693"/>
<dbReference type="DrugCentral" id="P04191"/>
<dbReference type="TCDB" id="3.A.3.2.43">
    <property type="family name" value="the p-type atpase (p-atpase) superfamily"/>
</dbReference>
<dbReference type="SwissPalm" id="P04191"/>
<dbReference type="PaxDb" id="9986-ENSOCUP00000002327"/>
<dbReference type="GeneID" id="100037716"/>
<dbReference type="KEGG" id="ocu:100037716"/>
<dbReference type="CTD" id="487"/>
<dbReference type="eggNOG" id="KOG0202">
    <property type="taxonomic scope" value="Eukaryota"/>
</dbReference>
<dbReference type="InParanoid" id="P04191"/>
<dbReference type="OrthoDB" id="3352408at2759"/>
<dbReference type="BRENDA" id="7.2.2.10">
    <property type="organism ID" value="1749"/>
</dbReference>
<dbReference type="SABIO-RK" id="P04191"/>
<dbReference type="EvolutionaryTrace" id="P04191"/>
<dbReference type="Proteomes" id="UP000001811">
    <property type="component" value="Unplaced"/>
</dbReference>
<dbReference type="GO" id="GO:0005783">
    <property type="term" value="C:endoplasmic reticulum"/>
    <property type="evidence" value="ECO:0000314"/>
    <property type="project" value="UniProtKB"/>
</dbReference>
<dbReference type="GO" id="GO:0005789">
    <property type="term" value="C:endoplasmic reticulum membrane"/>
    <property type="evidence" value="ECO:0000250"/>
    <property type="project" value="UniProtKB"/>
</dbReference>
<dbReference type="GO" id="GO:0005793">
    <property type="term" value="C:endoplasmic reticulum-Golgi intermediate compartment"/>
    <property type="evidence" value="ECO:0000314"/>
    <property type="project" value="UniProtKB"/>
</dbReference>
<dbReference type="GO" id="GO:0031673">
    <property type="term" value="C:H zone"/>
    <property type="evidence" value="ECO:0000250"/>
    <property type="project" value="UniProtKB"/>
</dbReference>
<dbReference type="GO" id="GO:0031674">
    <property type="term" value="C:I band"/>
    <property type="evidence" value="ECO:0000250"/>
    <property type="project" value="UniProtKB"/>
</dbReference>
<dbReference type="GO" id="GO:0016020">
    <property type="term" value="C:membrane"/>
    <property type="evidence" value="ECO:0000314"/>
    <property type="project" value="UniProtKB"/>
</dbReference>
<dbReference type="GO" id="GO:0048471">
    <property type="term" value="C:perinuclear region of cytoplasm"/>
    <property type="evidence" value="ECO:0000314"/>
    <property type="project" value="UniProtKB"/>
</dbReference>
<dbReference type="GO" id="GO:0016529">
    <property type="term" value="C:sarcoplasmic reticulum"/>
    <property type="evidence" value="ECO:0000314"/>
    <property type="project" value="BHF-UCL"/>
</dbReference>
<dbReference type="GO" id="GO:0033017">
    <property type="term" value="C:sarcoplasmic reticulum membrane"/>
    <property type="evidence" value="ECO:0000314"/>
    <property type="project" value="UniProtKB"/>
</dbReference>
<dbReference type="GO" id="GO:0005524">
    <property type="term" value="F:ATP binding"/>
    <property type="evidence" value="ECO:0000314"/>
    <property type="project" value="UniProtKB"/>
</dbReference>
<dbReference type="GO" id="GO:0016887">
    <property type="term" value="F:ATP hydrolysis activity"/>
    <property type="evidence" value="ECO:0007669"/>
    <property type="project" value="InterPro"/>
</dbReference>
<dbReference type="GO" id="GO:0005509">
    <property type="term" value="F:calcium ion binding"/>
    <property type="evidence" value="ECO:0000314"/>
    <property type="project" value="UniProtKB"/>
</dbReference>
<dbReference type="GO" id="GO:0005388">
    <property type="term" value="F:P-type calcium transporter activity"/>
    <property type="evidence" value="ECO:0000314"/>
    <property type="project" value="UniProtKB"/>
</dbReference>
<dbReference type="GO" id="GO:1990036">
    <property type="term" value="P:calcium ion import into sarcoplasmic reticulum"/>
    <property type="evidence" value="ECO:0000314"/>
    <property type="project" value="BHF-UCL"/>
</dbReference>
<dbReference type="GO" id="GO:0006816">
    <property type="term" value="P:calcium ion transport"/>
    <property type="evidence" value="ECO:0000314"/>
    <property type="project" value="UniProtKB"/>
</dbReference>
<dbReference type="GO" id="GO:0045988">
    <property type="term" value="P:negative regulation of striated muscle contraction"/>
    <property type="evidence" value="ECO:0000250"/>
    <property type="project" value="UniProtKB"/>
</dbReference>
<dbReference type="GO" id="GO:1901896">
    <property type="term" value="P:positive regulation of ATPase-coupled calcium transmembrane transporter activity"/>
    <property type="evidence" value="ECO:0000250"/>
    <property type="project" value="UniProtKB"/>
</dbReference>
<dbReference type="GO" id="GO:1902082">
    <property type="term" value="P:positive regulation of calcium ion import into sarcoplasmic reticulum"/>
    <property type="evidence" value="ECO:0000250"/>
    <property type="project" value="UniProtKB"/>
</dbReference>
<dbReference type="GO" id="GO:0106134">
    <property type="term" value="P:positive regulation of cardiac muscle cell contraction"/>
    <property type="evidence" value="ECO:0000250"/>
    <property type="project" value="UniProtKB"/>
</dbReference>
<dbReference type="GO" id="GO:0031448">
    <property type="term" value="P:positive regulation of fast-twitch skeletal muscle fiber contraction"/>
    <property type="evidence" value="ECO:0000250"/>
    <property type="project" value="UniProtKB"/>
</dbReference>
<dbReference type="GO" id="GO:0006942">
    <property type="term" value="P:regulation of striated muscle contraction"/>
    <property type="evidence" value="ECO:0000250"/>
    <property type="project" value="UniProtKB"/>
</dbReference>
<dbReference type="CDD" id="cd02083">
    <property type="entry name" value="P-type_ATPase_SERCA"/>
    <property type="match status" value="1"/>
</dbReference>
<dbReference type="FunFam" id="3.40.1110.10:FF:000003">
    <property type="entry name" value="Calcium-transporting ATPase"/>
    <property type="match status" value="1"/>
</dbReference>
<dbReference type="FunFam" id="3.40.50.1000:FF:000005">
    <property type="entry name" value="Calcium-transporting ATPase 1"/>
    <property type="match status" value="1"/>
</dbReference>
<dbReference type="FunFam" id="1.20.1110.10:FF:000065">
    <property type="entry name" value="Sarcoplasmic/endoplasmic reticulum calcium ATPase 1"/>
    <property type="match status" value="3"/>
</dbReference>
<dbReference type="FunFam" id="2.70.150.10:FF:000160">
    <property type="entry name" value="Sarcoplasmic/endoplasmic reticulum calcium ATPase 1"/>
    <property type="match status" value="2"/>
</dbReference>
<dbReference type="Gene3D" id="3.40.1110.10">
    <property type="entry name" value="Calcium-transporting ATPase, cytoplasmic domain N"/>
    <property type="match status" value="1"/>
</dbReference>
<dbReference type="Gene3D" id="2.70.150.10">
    <property type="entry name" value="Calcium-transporting ATPase, cytoplasmic transduction domain A"/>
    <property type="match status" value="1"/>
</dbReference>
<dbReference type="Gene3D" id="1.20.1110.10">
    <property type="entry name" value="Calcium-transporting ATPase, transmembrane domain"/>
    <property type="match status" value="1"/>
</dbReference>
<dbReference type="Gene3D" id="3.40.50.1000">
    <property type="entry name" value="HAD superfamily/HAD-like"/>
    <property type="match status" value="1"/>
</dbReference>
<dbReference type="InterPro" id="IPR006068">
    <property type="entry name" value="ATPase_P-typ_cation-transptr_C"/>
</dbReference>
<dbReference type="InterPro" id="IPR004014">
    <property type="entry name" value="ATPase_P-typ_cation-transptr_N"/>
</dbReference>
<dbReference type="InterPro" id="IPR023299">
    <property type="entry name" value="ATPase_P-typ_cyto_dom_N"/>
</dbReference>
<dbReference type="InterPro" id="IPR018303">
    <property type="entry name" value="ATPase_P-typ_P_site"/>
</dbReference>
<dbReference type="InterPro" id="IPR023298">
    <property type="entry name" value="ATPase_P-typ_TM_dom_sf"/>
</dbReference>
<dbReference type="InterPro" id="IPR008250">
    <property type="entry name" value="ATPase_P-typ_transduc_dom_A_sf"/>
</dbReference>
<dbReference type="InterPro" id="IPR036412">
    <property type="entry name" value="HAD-like_sf"/>
</dbReference>
<dbReference type="InterPro" id="IPR023214">
    <property type="entry name" value="HAD_sf"/>
</dbReference>
<dbReference type="InterPro" id="IPR005782">
    <property type="entry name" value="P-type_ATPase_IIA"/>
</dbReference>
<dbReference type="InterPro" id="IPR001757">
    <property type="entry name" value="P_typ_ATPase"/>
</dbReference>
<dbReference type="InterPro" id="IPR044492">
    <property type="entry name" value="P_typ_ATPase_HD_dom"/>
</dbReference>
<dbReference type="NCBIfam" id="TIGR01116">
    <property type="entry name" value="ATPase-IIA1_Ca"/>
    <property type="match status" value="1"/>
</dbReference>
<dbReference type="NCBIfam" id="TIGR01494">
    <property type="entry name" value="ATPase_P-type"/>
    <property type="match status" value="2"/>
</dbReference>
<dbReference type="PANTHER" id="PTHR42861">
    <property type="entry name" value="CALCIUM-TRANSPORTING ATPASE"/>
    <property type="match status" value="1"/>
</dbReference>
<dbReference type="Pfam" id="PF13246">
    <property type="entry name" value="Cation_ATPase"/>
    <property type="match status" value="1"/>
</dbReference>
<dbReference type="Pfam" id="PF00689">
    <property type="entry name" value="Cation_ATPase_C"/>
    <property type="match status" value="1"/>
</dbReference>
<dbReference type="Pfam" id="PF00690">
    <property type="entry name" value="Cation_ATPase_N"/>
    <property type="match status" value="1"/>
</dbReference>
<dbReference type="Pfam" id="PF00122">
    <property type="entry name" value="E1-E2_ATPase"/>
    <property type="match status" value="1"/>
</dbReference>
<dbReference type="Pfam" id="PF00702">
    <property type="entry name" value="Hydrolase"/>
    <property type="match status" value="1"/>
</dbReference>
<dbReference type="PRINTS" id="PR00119">
    <property type="entry name" value="CATATPASE"/>
</dbReference>
<dbReference type="PRINTS" id="PR00120">
    <property type="entry name" value="HATPASE"/>
</dbReference>
<dbReference type="SFLD" id="SFLDS00003">
    <property type="entry name" value="Haloacid_Dehalogenase"/>
    <property type="match status" value="1"/>
</dbReference>
<dbReference type="SFLD" id="SFLDF00027">
    <property type="entry name" value="p-type_atpase"/>
    <property type="match status" value="1"/>
</dbReference>
<dbReference type="SMART" id="SM00831">
    <property type="entry name" value="Cation_ATPase_N"/>
    <property type="match status" value="1"/>
</dbReference>
<dbReference type="SUPFAM" id="SSF81653">
    <property type="entry name" value="Calcium ATPase, transduction domain A"/>
    <property type="match status" value="1"/>
</dbReference>
<dbReference type="SUPFAM" id="SSF81665">
    <property type="entry name" value="Calcium ATPase, transmembrane domain M"/>
    <property type="match status" value="1"/>
</dbReference>
<dbReference type="SUPFAM" id="SSF56784">
    <property type="entry name" value="HAD-like"/>
    <property type="match status" value="1"/>
</dbReference>
<dbReference type="SUPFAM" id="SSF81660">
    <property type="entry name" value="Metal cation-transporting ATPase, ATP-binding domain N"/>
    <property type="match status" value="1"/>
</dbReference>
<dbReference type="PROSITE" id="PS00154">
    <property type="entry name" value="ATPASE_E1_E2"/>
    <property type="match status" value="1"/>
</dbReference>
<feature type="chain" id="PRO_0000046189" description="Sarcoplasmic/endoplasmic reticulum calcium ATPase 1">
    <location>
        <begin position="1"/>
        <end position="1001"/>
    </location>
</feature>
<feature type="topological domain" description="Cytoplasmic" evidence="5">
    <location>
        <begin position="1"/>
        <end position="48"/>
    </location>
</feature>
<feature type="transmembrane region" description="Helical; Name=1" evidence="5">
    <location>
        <begin position="49"/>
        <end position="69"/>
    </location>
</feature>
<feature type="topological domain" description="Lumenal" evidence="5">
    <location>
        <begin position="70"/>
        <end position="89"/>
    </location>
</feature>
<feature type="transmembrane region" description="Helical; Name=2" evidence="5">
    <location>
        <begin position="90"/>
        <end position="110"/>
    </location>
</feature>
<feature type="topological domain" description="Cytoplasmic" evidence="5">
    <location>
        <begin position="111"/>
        <end position="253"/>
    </location>
</feature>
<feature type="transmembrane region" description="Helical; Name=3" evidence="5">
    <location>
        <begin position="254"/>
        <end position="273"/>
    </location>
</feature>
<feature type="topological domain" description="Lumenal" evidence="5">
    <location>
        <begin position="274"/>
        <end position="295"/>
    </location>
</feature>
<feature type="transmembrane region" description="Helical; Name=4" evidence="5">
    <location>
        <begin position="296"/>
        <end position="313"/>
    </location>
</feature>
<feature type="topological domain" description="Cytoplasmic" evidence="5">
    <location>
        <begin position="314"/>
        <end position="757"/>
    </location>
</feature>
<feature type="transmembrane region" description="Helical; Name=5" evidence="5">
    <location>
        <begin position="758"/>
        <end position="777"/>
    </location>
</feature>
<feature type="topological domain" description="Lumenal" evidence="5">
    <location>
        <begin position="778"/>
        <end position="787"/>
    </location>
</feature>
<feature type="transmembrane region" description="Helical; Name=6" evidence="5">
    <location>
        <begin position="788"/>
        <end position="808"/>
    </location>
</feature>
<feature type="topological domain" description="Cytoplasmic" evidence="5">
    <location>
        <begin position="809"/>
        <end position="828"/>
    </location>
</feature>
<feature type="transmembrane region" description="Helical; Name=7" evidence="5">
    <location>
        <begin position="829"/>
        <end position="851"/>
    </location>
</feature>
<feature type="topological domain" description="Lumenal" evidence="5">
    <location>
        <begin position="852"/>
        <end position="897"/>
    </location>
</feature>
<feature type="transmembrane region" description="Helical; Name=8" evidence="5">
    <location>
        <begin position="898"/>
        <end position="917"/>
    </location>
</feature>
<feature type="topological domain" description="Cytoplasmic" evidence="5">
    <location>
        <begin position="918"/>
        <end position="930"/>
    </location>
</feature>
<feature type="transmembrane region" description="Helical; Name=9" evidence="5">
    <location>
        <begin position="931"/>
        <end position="949"/>
    </location>
</feature>
<feature type="topological domain" description="Lumenal" evidence="5">
    <location>
        <begin position="950"/>
        <end position="964"/>
    </location>
</feature>
<feature type="transmembrane region" description="Helical; Name=10" evidence="5">
    <location>
        <begin position="965"/>
        <end position="985"/>
    </location>
</feature>
<feature type="topological domain" description="Cytoplasmic" evidence="5">
    <location>
        <begin position="986"/>
        <end position="1001"/>
    </location>
</feature>
<feature type="region of interest" description="Interaction with PLN" evidence="4 19">
    <location>
        <begin position="788"/>
        <end position="808"/>
    </location>
</feature>
<feature type="region of interest" description="Interaction with PLN" evidence="19">
    <location>
        <begin position="932"/>
        <end position="943"/>
    </location>
</feature>
<feature type="active site" description="4-aspartylphosphate intermediate" evidence="5 16">
    <location>
        <position position="351"/>
    </location>
</feature>
<feature type="binding site" evidence="5 11 12 33 36 44 51 55 65 71 91 92">
    <location>
        <position position="304"/>
    </location>
    <ligand>
        <name>Ca(2+)</name>
        <dbReference type="ChEBI" id="CHEBI:29108"/>
        <label>1</label>
    </ligand>
</feature>
<feature type="binding site" evidence="5 11 12 21 33 34 35 51 55 65 71 91 92">
    <location>
        <position position="305"/>
    </location>
    <ligand>
        <name>Ca(2+)</name>
        <dbReference type="ChEBI" id="CHEBI:29108"/>
        <label>1</label>
    </ligand>
</feature>
<feature type="binding site" evidence="5 11 12 21 33 34 35 36 51 55 65 71 80 83">
    <location>
        <position position="307"/>
    </location>
    <ligand>
        <name>Ca(2+)</name>
        <dbReference type="ChEBI" id="CHEBI:29108"/>
        <label>1</label>
    </ligand>
</feature>
<feature type="binding site" evidence="5 11 12 21 33 34 35 36 44 51 55 65 71 83 91 92">
    <location>
        <position position="309"/>
    </location>
    <ligand>
        <name>Ca(2+)</name>
        <dbReference type="ChEBI" id="CHEBI:29108"/>
        <label>1</label>
    </ligand>
</feature>
<feature type="binding site" evidence="11 12 34 35 36 37 38 51 52 53 54 61 62 63 64 66 67 70 76 88 90">
    <location>
        <position position="351"/>
    </location>
    <ligand>
        <name>Mg(2+)</name>
        <dbReference type="ChEBI" id="CHEBI:18420"/>
    </ligand>
</feature>
<feature type="binding site" evidence="11 12 21 34 36 55 71 77 83">
    <location>
        <position position="353"/>
    </location>
    <ligand>
        <name>ATP</name>
        <dbReference type="ChEBI" id="CHEBI:30616"/>
    </ligand>
</feature>
<feature type="binding site" evidence="11 12 34 35 36 37 38 51 52 53 54 61 62 63 64 66 67 70 76 88 90">
    <location>
        <position position="353"/>
    </location>
    <ligand>
        <name>Mg(2+)</name>
        <dbReference type="ChEBI" id="CHEBI:18420"/>
    </ligand>
</feature>
<feature type="binding site" evidence="11 21 35 40 41 45 51 55 56 82 83 92">
    <location>
        <position position="442"/>
    </location>
    <ligand>
        <name>ATP</name>
        <dbReference type="ChEBI" id="CHEBI:30616"/>
    </ligand>
</feature>
<feature type="binding site" evidence="11 12 21 34 35 36 37 45 51 55 64 66 67 71 76 83 92">
    <location>
        <position position="489"/>
    </location>
    <ligand>
        <name>ATP</name>
        <dbReference type="ChEBI" id="CHEBI:30616"/>
    </ligand>
</feature>
<feature type="binding site" evidence="11 21 34 40 42 55 71 82 83">
    <location>
        <position position="515"/>
    </location>
    <ligand>
        <name>ATP</name>
        <dbReference type="ChEBI" id="CHEBI:30616"/>
    </ligand>
</feature>
<feature type="binding site" evidence="11 12 21 34 36 40 41 42 45 55 64 71 77 82 83">
    <location>
        <position position="560"/>
    </location>
    <ligand>
        <name>ATP</name>
        <dbReference type="ChEBI" id="CHEBI:30616"/>
    </ligand>
</feature>
<feature type="binding site" evidence="11 12 21 34 35 36 55 71 83 92">
    <location>
        <position position="625"/>
    </location>
    <ligand>
        <name>ATP</name>
        <dbReference type="ChEBI" id="CHEBI:30616"/>
    </ligand>
</feature>
<feature type="binding site" evidence="11 12 21 34 36 55 71 82 83">
    <location>
        <position position="626"/>
    </location>
    <ligand>
        <name>ATP</name>
        <dbReference type="ChEBI" id="CHEBI:30616"/>
    </ligand>
</feature>
<feature type="binding site" evidence="11 35">
    <location>
        <position position="627"/>
    </location>
    <ligand>
        <name>ATP</name>
        <dbReference type="ChEBI" id="CHEBI:30616"/>
    </ligand>
</feature>
<feature type="binding site" evidence="11 21 34 35 36 51 55 66 67 71 76 83 92">
    <location>
        <position position="678"/>
    </location>
    <ligand>
        <name>ATP</name>
        <dbReference type="ChEBI" id="CHEBI:30616"/>
    </ligand>
</feature>
<feature type="binding site" evidence="11 21 34 55 71 83">
    <location>
        <position position="684"/>
    </location>
    <ligand>
        <name>ATP</name>
        <dbReference type="ChEBI" id="CHEBI:30616"/>
    </ligand>
</feature>
<feature type="binding site" evidence="11 12 34 35 36 37 38 51 52 53 54 61 62 63 64 66 67 70 76 88 90">
    <location>
        <position position="703"/>
    </location>
    <ligand>
        <name>Mg(2+)</name>
        <dbReference type="ChEBI" id="CHEBI:18420"/>
    </ligand>
</feature>
<feature type="binding site" evidence="11 21 34 36 55 71 83">
    <location>
        <position position="706"/>
    </location>
    <ligand>
        <name>ATP</name>
        <dbReference type="ChEBI" id="CHEBI:30616"/>
    </ligand>
</feature>
<feature type="binding site" evidence="5 11 12 21 33 34 35 36 44 51 55 65 71 80 83 91 92">
    <location>
        <position position="768"/>
    </location>
    <ligand>
        <name>Ca(2+)</name>
        <dbReference type="ChEBI" id="CHEBI:29108"/>
        <label>2</label>
    </ligand>
</feature>
<feature type="binding site" evidence="5 11 12 21 33 34 35 36 44 51 55 65 71 91 92">
    <location>
        <position position="771"/>
    </location>
    <ligand>
        <name>Ca(2+)</name>
        <dbReference type="ChEBI" id="CHEBI:29108"/>
        <label>2</label>
    </ligand>
</feature>
<feature type="binding site" evidence="11 12 21 33 34 35 51 65 71 83 91 92">
    <location>
        <position position="796"/>
    </location>
    <ligand>
        <name>Ca(2+)</name>
        <dbReference type="ChEBI" id="CHEBI:29108"/>
        <label>1</label>
    </ligand>
</feature>
<feature type="binding site" evidence="5 11 12 21 33 34 35 36 44 51 55 65 71 80 83 91 92">
    <location>
        <position position="799"/>
    </location>
    <ligand>
        <name>Ca(2+)</name>
        <dbReference type="ChEBI" id="CHEBI:29108"/>
        <label>2</label>
    </ligand>
</feature>
<feature type="binding site" evidence="5 11 12 21 33 34 35 36 51 55 83 91 92">
    <location>
        <position position="800"/>
    </location>
    <ligand>
        <name>Ca(2+)</name>
        <dbReference type="ChEBI" id="CHEBI:29108"/>
        <label>1</label>
    </ligand>
</feature>
<feature type="binding site" evidence="5 11 12 21 33 35 36 44 51 55 65 71 80 83 91 92">
    <location>
        <position position="800"/>
    </location>
    <ligand>
        <name>Ca(2+)</name>
        <dbReference type="ChEBI" id="CHEBI:29108"/>
        <label>2</label>
    </ligand>
</feature>
<feature type="binding site" evidence="5 11 12 21 33 34 44 55 65 80 83">
    <location>
        <position position="908"/>
    </location>
    <ligand>
        <name>Ca(2+)</name>
        <dbReference type="ChEBI" id="CHEBI:29108"/>
        <label>2</label>
    </ligand>
</feature>
<feature type="modified residue" description="Phosphothreonine" evidence="2">
    <location>
        <position position="441"/>
    </location>
</feature>
<feature type="modified residue" description="Phosphothreonine" evidence="2">
    <location>
        <position position="569"/>
    </location>
</feature>
<feature type="modified residue" description="Phosphoserine" evidence="2">
    <location>
        <position position="581"/>
    </location>
</feature>
<feature type="disulfide bond" evidence="5 7 8 12 13 15 16 17 19 20 22 26 32 33 36 37 39 40 41 42 43 44 45 46 47 48 49 50 51 52 53 54 55 56 57 58 59 60 61 62 63 64 66 67 68 69 70 72 73 74 75 76 78 79 80 81 82 84 85 86 87 88 89 91 96">
    <location>
        <begin position="876"/>
        <end position="888"/>
    </location>
</feature>
<feature type="splice variant" id="VSP_000356" description="In isoform SERCA1A." evidence="29">
    <original>DPEDERRK</original>
    <variation>G</variation>
    <location>
        <begin position="994"/>
        <end position="1001"/>
    </location>
</feature>
<feature type="mutagenesis site" description="Interferes with conformation changes that are essential for ATP-dependent Ca(2+) transport." evidence="26">
    <original>E</original>
    <variation>A</variation>
    <location>
        <position position="309"/>
    </location>
</feature>
<feature type="mutagenesis site" description="No loss of calcium binding. Strongly decreased rate of phosphorylation of the active site Asp residue. Interferes with conformation changes that are essential for ATP-dependent Ca(2+)transport." evidence="20 26">
    <original>E</original>
    <variation>Q</variation>
    <location>
        <position position="309"/>
    </location>
</feature>
<feature type="mutagenesis site" description="Almost complete loss of Ca(2+) transport activity because of reduced Ca(2+) affinity." evidence="6">
    <original>P</original>
    <variation>L</variation>
    <location>
        <position position="789"/>
    </location>
</feature>
<feature type="mutagenesis site" description="Loss of ATP-dependent Ca(2+)transport." evidence="7">
    <original>C</original>
    <variation>A</variation>
    <location>
        <position position="876"/>
    </location>
</feature>
<feature type="mutagenesis site" description="Loss of ATP-dependent Ca(2+)transport." evidence="7">
    <original>C</original>
    <variation>A</variation>
    <location>
        <position position="888"/>
    </location>
</feature>
<feature type="helix" evidence="103">
    <location>
        <begin position="4"/>
        <end position="6"/>
    </location>
</feature>
<feature type="helix" evidence="103">
    <location>
        <begin position="9"/>
        <end position="16"/>
    </location>
</feature>
<feature type="turn" evidence="103">
    <location>
        <begin position="20"/>
        <end position="22"/>
    </location>
</feature>
<feature type="helix" evidence="103">
    <location>
        <begin position="26"/>
        <end position="36"/>
    </location>
</feature>
<feature type="strand" evidence="113">
    <location>
        <begin position="43"/>
        <end position="45"/>
    </location>
</feature>
<feature type="helix" evidence="103">
    <location>
        <begin position="49"/>
        <end position="54"/>
    </location>
</feature>
<feature type="helix" evidence="103">
    <location>
        <begin position="55"/>
        <end position="57"/>
    </location>
</feature>
<feature type="helix" evidence="103">
    <location>
        <begin position="60"/>
        <end position="75"/>
    </location>
</feature>
<feature type="strand" evidence="101">
    <location>
        <begin position="76"/>
        <end position="78"/>
    </location>
</feature>
<feature type="strand" evidence="105">
    <location>
        <begin position="80"/>
        <end position="82"/>
    </location>
</feature>
<feature type="helix" evidence="103">
    <location>
        <begin position="83"/>
        <end position="85"/>
    </location>
</feature>
<feature type="strand" evidence="103">
    <location>
        <begin position="86"/>
        <end position="88"/>
    </location>
</feature>
<feature type="helix" evidence="103">
    <location>
        <begin position="89"/>
        <end position="111"/>
    </location>
</feature>
<feature type="helix" evidence="103">
    <location>
        <begin position="115"/>
        <end position="119"/>
    </location>
</feature>
<feature type="helix" evidence="103">
    <location>
        <begin position="120"/>
        <end position="122"/>
    </location>
</feature>
<feature type="strand" evidence="103">
    <location>
        <begin position="125"/>
        <end position="131"/>
    </location>
</feature>
<feature type="strand" evidence="106">
    <location>
        <begin position="132"/>
        <end position="136"/>
    </location>
</feature>
<feature type="strand" evidence="103">
    <location>
        <begin position="138"/>
        <end position="141"/>
    </location>
</feature>
<feature type="helix" evidence="103">
    <location>
        <begin position="142"/>
        <end position="144"/>
    </location>
</feature>
<feature type="strand" evidence="103">
    <location>
        <begin position="150"/>
        <end position="154"/>
    </location>
</feature>
<feature type="strand" evidence="103">
    <location>
        <begin position="161"/>
        <end position="168"/>
    </location>
</feature>
<feature type="strand" evidence="99">
    <location>
        <begin position="170"/>
        <end position="172"/>
    </location>
</feature>
<feature type="strand" evidence="103">
    <location>
        <begin position="173"/>
        <end position="176"/>
    </location>
</feature>
<feature type="helix" evidence="103">
    <location>
        <begin position="178"/>
        <end position="181"/>
    </location>
</feature>
<feature type="strand" evidence="103">
    <location>
        <begin position="187"/>
        <end position="189"/>
    </location>
</feature>
<feature type="helix" evidence="103">
    <location>
        <begin position="201"/>
        <end position="203"/>
    </location>
</feature>
<feature type="strand" evidence="103">
    <location>
        <begin position="213"/>
        <end position="216"/>
    </location>
</feature>
<feature type="strand" evidence="103">
    <location>
        <begin position="218"/>
        <end position="225"/>
    </location>
</feature>
<feature type="helix" evidence="103">
    <location>
        <begin position="227"/>
        <end position="229"/>
    </location>
</feature>
<feature type="helix" evidence="103">
    <location>
        <begin position="231"/>
        <end position="240"/>
    </location>
</feature>
<feature type="helix" evidence="103">
    <location>
        <begin position="248"/>
        <end position="273"/>
    </location>
</feature>
<feature type="helix" evidence="103">
    <location>
        <begin position="274"/>
        <end position="280"/>
    </location>
</feature>
<feature type="strand" evidence="103">
    <location>
        <begin position="283"/>
        <end position="286"/>
    </location>
</feature>
<feature type="helix" evidence="103">
    <location>
        <begin position="288"/>
        <end position="306"/>
    </location>
</feature>
<feature type="helix" evidence="103">
    <location>
        <begin position="311"/>
        <end position="328"/>
    </location>
</feature>
<feature type="strand" evidence="103">
    <location>
        <begin position="331"/>
        <end position="334"/>
    </location>
</feature>
<feature type="helix" evidence="103">
    <location>
        <begin position="338"/>
        <end position="343"/>
    </location>
</feature>
<feature type="strand" evidence="103">
    <location>
        <begin position="347"/>
        <end position="352"/>
    </location>
</feature>
<feature type="turn" evidence="103">
    <location>
        <begin position="353"/>
        <end position="355"/>
    </location>
</feature>
<feature type="strand" evidence="103">
    <location>
        <begin position="362"/>
        <end position="373"/>
    </location>
</feature>
<feature type="strand" evidence="103">
    <location>
        <begin position="376"/>
        <end position="384"/>
    </location>
</feature>
<feature type="strand" evidence="103">
    <location>
        <begin position="387"/>
        <end position="391"/>
    </location>
</feature>
<feature type="strand" evidence="103">
    <location>
        <begin position="395"/>
        <end position="397"/>
    </location>
</feature>
<feature type="strand" evidence="110">
    <location>
        <begin position="400"/>
        <end position="402"/>
    </location>
</feature>
<feature type="helix" evidence="103">
    <location>
        <begin position="404"/>
        <end position="406"/>
    </location>
</feature>
<feature type="helix" evidence="103">
    <location>
        <begin position="408"/>
        <end position="419"/>
    </location>
</feature>
<feature type="strand" evidence="103">
    <location>
        <begin position="424"/>
        <end position="428"/>
    </location>
</feature>
<feature type="turn" evidence="103">
    <location>
        <begin position="429"/>
        <end position="432"/>
    </location>
</feature>
<feature type="strand" evidence="103">
    <location>
        <begin position="433"/>
        <end position="438"/>
    </location>
</feature>
<feature type="helix" evidence="103">
    <location>
        <begin position="440"/>
        <end position="452"/>
    </location>
</feature>
<feature type="turn" evidence="106">
    <location>
        <begin position="453"/>
        <end position="455"/>
    </location>
</feature>
<feature type="strand" evidence="98">
    <location>
        <begin position="460"/>
        <end position="462"/>
    </location>
</feature>
<feature type="turn" evidence="103">
    <location>
        <begin position="464"/>
        <end position="466"/>
    </location>
</feature>
<feature type="helix" evidence="108">
    <location>
        <begin position="467"/>
        <end position="469"/>
    </location>
</feature>
<feature type="helix" evidence="103">
    <location>
        <begin position="470"/>
        <end position="478"/>
    </location>
</feature>
<feature type="strand" evidence="103">
    <location>
        <begin position="479"/>
        <end position="488"/>
    </location>
</feature>
<feature type="turn" evidence="103">
    <location>
        <begin position="489"/>
        <end position="492"/>
    </location>
</feature>
<feature type="strand" evidence="103">
    <location>
        <begin position="493"/>
        <end position="502"/>
    </location>
</feature>
<feature type="helix" evidence="98">
    <location>
        <begin position="503"/>
        <end position="508"/>
    </location>
</feature>
<feature type="strand" evidence="103">
    <location>
        <begin position="511"/>
        <end position="516"/>
    </location>
</feature>
<feature type="helix" evidence="103">
    <location>
        <begin position="518"/>
        <end position="523"/>
    </location>
</feature>
<feature type="strand" evidence="103">
    <location>
        <begin position="525"/>
        <end position="530"/>
    </location>
</feature>
<feature type="strand" evidence="103">
    <location>
        <begin position="533"/>
        <end position="536"/>
    </location>
</feature>
<feature type="helix" evidence="103">
    <location>
        <begin position="539"/>
        <end position="554"/>
    </location>
</feature>
<feature type="turn" evidence="107">
    <location>
        <begin position="555"/>
        <end position="557"/>
    </location>
</feature>
<feature type="strand" evidence="103">
    <location>
        <begin position="560"/>
        <end position="569"/>
    </location>
</feature>
<feature type="helix" evidence="103">
    <location>
        <begin position="573"/>
        <end position="575"/>
    </location>
</feature>
<feature type="helix" evidence="103">
    <location>
        <begin position="581"/>
        <end position="583"/>
    </location>
</feature>
<feature type="helix" evidence="103">
    <location>
        <begin position="584"/>
        <end position="587"/>
    </location>
</feature>
<feature type="strand" evidence="103">
    <location>
        <begin position="590"/>
        <end position="600"/>
    </location>
</feature>
<feature type="helix" evidence="103">
    <location>
        <begin position="607"/>
        <end position="616"/>
    </location>
</feature>
<feature type="strand" evidence="103">
    <location>
        <begin position="620"/>
        <end position="627"/>
    </location>
</feature>
<feature type="helix" evidence="103">
    <location>
        <begin position="629"/>
        <end position="638"/>
    </location>
</feature>
<feature type="strand" evidence="109">
    <location>
        <begin position="640"/>
        <end position="642"/>
    </location>
</feature>
<feature type="strand" evidence="111">
    <location>
        <begin position="644"/>
        <end position="646"/>
    </location>
</feature>
<feature type="turn" evidence="103">
    <location>
        <begin position="649"/>
        <end position="651"/>
    </location>
</feature>
<feature type="strand" evidence="103">
    <location>
        <begin position="652"/>
        <end position="654"/>
    </location>
</feature>
<feature type="helix" evidence="103">
    <location>
        <begin position="655"/>
        <end position="659"/>
    </location>
</feature>
<feature type="helix" evidence="103">
    <location>
        <begin position="663"/>
        <end position="672"/>
    </location>
</feature>
<feature type="strand" evidence="103">
    <location>
        <begin position="675"/>
        <end position="678"/>
    </location>
</feature>
<feature type="helix" evidence="103">
    <location>
        <begin position="683"/>
        <end position="692"/>
    </location>
</feature>
<feature type="turn" evidence="103">
    <location>
        <begin position="693"/>
        <end position="695"/>
    </location>
</feature>
<feature type="strand" evidence="103">
    <location>
        <begin position="698"/>
        <end position="702"/>
    </location>
</feature>
<feature type="helix" evidence="103">
    <location>
        <begin position="705"/>
        <end position="707"/>
    </location>
</feature>
<feature type="helix" evidence="103">
    <location>
        <begin position="708"/>
        <end position="713"/>
    </location>
</feature>
<feature type="strand" evidence="103">
    <location>
        <begin position="716"/>
        <end position="720"/>
    </location>
</feature>
<feature type="helix" evidence="103">
    <location>
        <begin position="725"/>
        <end position="729"/>
    </location>
</feature>
<feature type="strand" evidence="103">
    <location>
        <begin position="732"/>
        <end position="735"/>
    </location>
</feature>
<feature type="helix" evidence="103">
    <location>
        <begin position="740"/>
        <end position="780"/>
    </location>
</feature>
<feature type="helix" evidence="103">
    <location>
        <begin position="789"/>
        <end position="797"/>
    </location>
</feature>
<feature type="turn" evidence="103">
    <location>
        <begin position="798"/>
        <end position="800"/>
    </location>
</feature>
<feature type="helix" evidence="103">
    <location>
        <begin position="801"/>
        <end position="807"/>
    </location>
</feature>
<feature type="helix" evidence="103">
    <location>
        <begin position="816"/>
        <end position="818"/>
    </location>
</feature>
<feature type="strand" evidence="100">
    <location>
        <begin position="824"/>
        <end position="826"/>
    </location>
</feature>
<feature type="helix" evidence="103">
    <location>
        <begin position="831"/>
        <end position="855"/>
    </location>
</feature>
<feature type="turn" evidence="102">
    <location>
        <begin position="856"/>
        <end position="858"/>
    </location>
</feature>
<feature type="strand" evidence="103">
    <location>
        <begin position="860"/>
        <end position="862"/>
    </location>
</feature>
<feature type="turn" evidence="104">
    <location>
        <begin position="866"/>
        <end position="868"/>
    </location>
</feature>
<feature type="helix" evidence="103">
    <location>
        <begin position="870"/>
        <end position="872"/>
    </location>
</feature>
<feature type="helix" evidence="97">
    <location>
        <begin position="873"/>
        <end position="875"/>
    </location>
</feature>
<feature type="strand" evidence="107">
    <location>
        <begin position="876"/>
        <end position="879"/>
    </location>
</feature>
<feature type="turn" evidence="107">
    <location>
        <begin position="880"/>
        <end position="882"/>
    </location>
</feature>
<feature type="strand" evidence="109">
    <location>
        <begin position="884"/>
        <end position="886"/>
    </location>
</feature>
<feature type="helix" evidence="103">
    <location>
        <begin position="890"/>
        <end position="892"/>
    </location>
</feature>
<feature type="helix" evidence="103">
    <location>
        <begin position="894"/>
        <end position="913"/>
    </location>
</feature>
<feature type="strand" evidence="97">
    <location>
        <begin position="916"/>
        <end position="919"/>
    </location>
</feature>
<feature type="turn" evidence="103">
    <location>
        <begin position="922"/>
        <end position="924"/>
    </location>
</feature>
<feature type="helix" evidence="103">
    <location>
        <begin position="927"/>
        <end position="929"/>
    </location>
</feature>
<feature type="helix" evidence="103">
    <location>
        <begin position="931"/>
        <end position="949"/>
    </location>
</feature>
<feature type="helix" evidence="103">
    <location>
        <begin position="952"/>
        <end position="956"/>
    </location>
</feature>
<feature type="helix" evidence="103">
    <location>
        <begin position="964"/>
        <end position="974"/>
    </location>
</feature>
<feature type="helix" evidence="103">
    <location>
        <begin position="976"/>
        <end position="990"/>
    </location>
</feature>
<feature type="turn" evidence="112">
    <location>
        <begin position="991"/>
        <end position="993"/>
    </location>
</feature>
<comment type="function">
    <text evidence="3 6 7 10 16 19 20 23">Key regulator of striated muscle performance by acting as the major Ca(2+) ATPase responsible for the reuptake of cytosolic Ca(2+) into the sarcoplasmic reticulum. Catalyzes the hydrolysis of ATP coupled with the translocation of calcium from the cytosol to the sarcoplasmic reticulum lumen (PubMed:10914677, PubMed:11438520, PubMed:15189864, PubMed:18075584, PubMed:23996003, PubMed:24270570, PubMed:29081402). Contributes to calcium sequestration involved in muscular excitation/contraction.</text>
</comment>
<comment type="catalytic activity">
    <reaction evidence="6 7 10 16 19 23 27">
        <text>Ca(2+)(in) + ATP + H2O = Ca(2+)(out) + ADP + phosphate + H(+)</text>
        <dbReference type="Rhea" id="RHEA:18105"/>
        <dbReference type="ChEBI" id="CHEBI:15377"/>
        <dbReference type="ChEBI" id="CHEBI:15378"/>
        <dbReference type="ChEBI" id="CHEBI:29108"/>
        <dbReference type="ChEBI" id="CHEBI:30616"/>
        <dbReference type="ChEBI" id="CHEBI:43474"/>
        <dbReference type="ChEBI" id="CHEBI:456216"/>
        <dbReference type="EC" id="7.2.2.10"/>
    </reaction>
    <physiologicalReaction direction="left-to-right" evidence="31">
        <dbReference type="Rhea" id="RHEA:18106"/>
    </physiologicalReaction>
</comment>
<comment type="cofactor">
    <cofactor evidence="11 12 13 14 16 18">
        <name>Mg(2+)</name>
        <dbReference type="ChEBI" id="CHEBI:18420"/>
    </cofactor>
</comment>
<comment type="activity regulation">
    <text evidence="3 4 19 23 28">Inhibited by sarcolipin (SLN) and myoregulin (MRLN) (PubMed:10551848, PubMed:29081402, PubMed:8428955). Has also been shown to be reversibly inhibited by phospholamban (PLN) at low calcium concentrations in vitro (PubMed:10551848, PubMed:23996003, PubMed:29081402, PubMed:8428955). Dephosphorylated PLN decreases the apparent affinity of the ATPase for calcium and this inhibition is regulated by the phosphorylation of PLN in vitro (PubMed:10551848, PubMed:8428955). Enhanced by DWORF; DWORF increases activity by displacing sarcolipin (SLN), phospholamban (PLN) and myoregulin (MRLN) (By similarity).</text>
</comment>
<comment type="subunit">
    <text evidence="1 3 4 17 18 19 23 28">Interacts with sarcolipin (SLN) (PubMed:23455422, PubMed:23455424, PubMed:29081402). Interacts with phospholamban (PLN) (PubMed:10551848, PubMed:23996003, PubMed:29081402, PubMed:8428955). Interacts with myoregulin (MRLN) (By similarity). Interacts with DWORF (By similarity). Interacts with VMP1 (By similarity).</text>
</comment>
<comment type="subcellular location">
    <subcellularLocation>
        <location evidence="9">Endoplasmic reticulum membrane</location>
        <topology evidence="5 8 11 12 13 14 15 16 17 18 19 20 21 22 26">Multi-pass membrane protein</topology>
    </subcellularLocation>
    <subcellularLocation>
        <location evidence="7 10 16 17 19 23 27">Sarcoplasmic reticulum membrane</location>
        <topology evidence="5 8 11 12 13 14 15 16 17 18 19 20 21 22 26">Multi-pass membrane protein</topology>
    </subcellularLocation>
</comment>
<comment type="alternative products">
    <event type="alternative splicing"/>
    <isoform>
        <id>P04191-1</id>
        <name>SERCA1B</name>
        <name>Neonatal</name>
        <sequence type="displayed"/>
    </isoform>
    <isoform>
        <id>P04191-2</id>
        <name>SERCA1A</name>
        <name>Adult</name>
        <sequence type="described" ref="VSP_000356"/>
    </isoform>
</comment>
<comment type="tissue specificity">
    <text evidence="5 7 10 16 17 19 23 24 25">Skeletal muscle (at protein level) (PubMed:10864315, PubMed:11438520, PubMed:15189864, PubMed:18075584, PubMed:23455422, PubMed:23996003, PubMed:29081402). Skeletal muscle, fast twitch muscle (type II) fibers (PubMed:2936465, PubMed:3029125).</text>
</comment>
<comment type="developmental stage">
    <text evidence="25">Isoform SERCA1A and isoform SERCA1B are predominantly found in adult and neonatal skeletal muscle respectively.</text>
</comment>
<comment type="domain">
    <text evidence="8 11 12 13 14 15 16 17 18 20 22 26 30">Ca(2+) and ATP binding cause major rearrangements of the cytoplasmic and transmembrane domains. According to the E1-E2 model, Ca(2+) binding to the cytosolic domain of the pump in the high-affinity E1 conformation is followed by the ATP-dependent phosphorylation of the active site Asp, giving rise to E1P. A conformational change of the phosphoenzyme gives rise to the low-affinity E2P state that exposes the Ca(2+) ions to the lumenal side and promotes Ca(2+) release. Dephosphorylation of the active site Asp mediates the subsequent return to the E1 conformation.</text>
</comment>
<comment type="domain">
    <text evidence="17 18 19">PLN and SLN both have a single transmembrane helix; both occupy a similar binding site on ATP2A1 that is situated between the ATP2A1 transmembrane helices.</text>
</comment>
<comment type="similarity">
    <text evidence="30">Belongs to the cation transport ATPase (P-type) (TC 3.A.3) family. Type IIA subfamily.</text>
</comment>
<organism>
    <name type="scientific">Oryctolagus cuniculus</name>
    <name type="common">Rabbit</name>
    <dbReference type="NCBI Taxonomy" id="9986"/>
    <lineage>
        <taxon>Eukaryota</taxon>
        <taxon>Metazoa</taxon>
        <taxon>Chordata</taxon>
        <taxon>Craniata</taxon>
        <taxon>Vertebrata</taxon>
        <taxon>Euteleostomi</taxon>
        <taxon>Mammalia</taxon>
        <taxon>Eutheria</taxon>
        <taxon>Euarchontoglires</taxon>
        <taxon>Glires</taxon>
        <taxon>Lagomorpha</taxon>
        <taxon>Leporidae</taxon>
        <taxon>Oryctolagus</taxon>
    </lineage>
</organism>
<protein>
    <recommendedName>
        <fullName>Sarcoplasmic/endoplasmic reticulum calcium ATPase 1</fullName>
        <shortName>SERCA1</shortName>
        <shortName>SR Ca(2+)-ATPase 1</shortName>
        <ecNumber evidence="6 7 10 16 19 23 27">7.2.2.10</ecNumber>
    </recommendedName>
    <alternativeName>
        <fullName>Calcium pump 1</fullName>
    </alternativeName>
    <alternativeName>
        <fullName>Calcium-transporting ATPase sarcoplasmic reticulum type, fast twitch skeletal muscle isoform</fullName>
    </alternativeName>
    <alternativeName>
        <fullName>Endoplasmic reticulum class 1/2 Ca(2+) ATPase</fullName>
    </alternativeName>
</protein>
<evidence type="ECO:0000250" key="1">
    <source>
        <dbReference type="UniProtKB" id="O14983"/>
    </source>
</evidence>
<evidence type="ECO:0000250" key="2">
    <source>
        <dbReference type="UniProtKB" id="Q64578"/>
    </source>
</evidence>
<evidence type="ECO:0000250" key="3">
    <source>
        <dbReference type="UniProtKB" id="Q8R429"/>
    </source>
</evidence>
<evidence type="ECO:0000269" key="4">
    <source>
    </source>
</evidence>
<evidence type="ECO:0000269" key="5">
    <source>
    </source>
</evidence>
<evidence type="ECO:0000269" key="6">
    <source>
    </source>
</evidence>
<evidence type="ECO:0000269" key="7">
    <source>
    </source>
</evidence>
<evidence type="ECO:0000269" key="8">
    <source>
    </source>
</evidence>
<evidence type="ECO:0000269" key="9">
    <source>
    </source>
</evidence>
<evidence type="ECO:0000269" key="10">
    <source>
    </source>
</evidence>
<evidence type="ECO:0000269" key="11">
    <source>
    </source>
</evidence>
<evidence type="ECO:0000269" key="12">
    <source>
    </source>
</evidence>
<evidence type="ECO:0000269" key="13">
    <source>
    </source>
</evidence>
<evidence type="ECO:0000269" key="14">
    <source>
    </source>
</evidence>
<evidence type="ECO:0000269" key="15">
    <source>
    </source>
</evidence>
<evidence type="ECO:0000269" key="16">
    <source>
    </source>
</evidence>
<evidence type="ECO:0000269" key="17">
    <source>
    </source>
</evidence>
<evidence type="ECO:0000269" key="18">
    <source>
    </source>
</evidence>
<evidence type="ECO:0000269" key="19">
    <source>
    </source>
</evidence>
<evidence type="ECO:0000269" key="20">
    <source>
    </source>
</evidence>
<evidence type="ECO:0000269" key="21">
    <source>
    </source>
</evidence>
<evidence type="ECO:0000269" key="22">
    <source>
    </source>
</evidence>
<evidence type="ECO:0000269" key="23">
    <source>
    </source>
</evidence>
<evidence type="ECO:0000269" key="24">
    <source>
    </source>
</evidence>
<evidence type="ECO:0000269" key="25">
    <source>
    </source>
</evidence>
<evidence type="ECO:0000269" key="26">
    <source>
    </source>
</evidence>
<evidence type="ECO:0000269" key="27">
    <source>
    </source>
</evidence>
<evidence type="ECO:0000269" key="28">
    <source>
    </source>
</evidence>
<evidence type="ECO:0000303" key="29">
    <source>
    </source>
</evidence>
<evidence type="ECO:0000305" key="30"/>
<evidence type="ECO:0000305" key="31">
    <source>
    </source>
</evidence>
<evidence type="ECO:0007744" key="32">
    <source>
        <dbReference type="PDB" id="1IWO"/>
    </source>
</evidence>
<evidence type="ECO:0007744" key="33">
    <source>
        <dbReference type="PDB" id="1SU4"/>
    </source>
</evidence>
<evidence type="ECO:0007744" key="34">
    <source>
        <dbReference type="PDB" id="1T5S"/>
    </source>
</evidence>
<evidence type="ECO:0007744" key="35">
    <source>
        <dbReference type="PDB" id="1T5T"/>
    </source>
</evidence>
<evidence type="ECO:0007744" key="36">
    <source>
        <dbReference type="PDB" id="1VFP"/>
    </source>
</evidence>
<evidence type="ECO:0007744" key="37">
    <source>
        <dbReference type="PDB" id="1WPG"/>
    </source>
</evidence>
<evidence type="ECO:0007744" key="38">
    <source>
        <dbReference type="PDB" id="1XP5"/>
    </source>
</evidence>
<evidence type="ECO:0007744" key="39">
    <source>
        <dbReference type="PDB" id="2AGV"/>
    </source>
</evidence>
<evidence type="ECO:0007744" key="40">
    <source>
        <dbReference type="PDB" id="2BY4"/>
    </source>
</evidence>
<evidence type="ECO:0007744" key="41">
    <source>
        <dbReference type="PDB" id="2C88"/>
    </source>
</evidence>
<evidence type="ECO:0007744" key="42">
    <source>
        <dbReference type="PDB" id="2C8K"/>
    </source>
</evidence>
<evidence type="ECO:0007744" key="43">
    <source>
        <dbReference type="PDB" id="2C8L"/>
    </source>
</evidence>
<evidence type="ECO:0007744" key="44">
    <source>
        <dbReference type="PDB" id="2C9M"/>
    </source>
</evidence>
<evidence type="ECO:0007744" key="45">
    <source>
        <dbReference type="PDB" id="2DQS"/>
    </source>
</evidence>
<evidence type="ECO:0007744" key="46">
    <source>
        <dbReference type="PDB" id="2EAR"/>
    </source>
</evidence>
<evidence type="ECO:0007744" key="47">
    <source>
        <dbReference type="PDB" id="2EAT"/>
    </source>
</evidence>
<evidence type="ECO:0007744" key="48">
    <source>
        <dbReference type="PDB" id="2EAU"/>
    </source>
</evidence>
<evidence type="ECO:0007744" key="49">
    <source>
        <dbReference type="PDB" id="2O9J"/>
    </source>
</evidence>
<evidence type="ECO:0007744" key="50">
    <source>
        <dbReference type="PDB" id="2YFY"/>
    </source>
</evidence>
<evidence type="ECO:0007744" key="51">
    <source>
        <dbReference type="PDB" id="2ZBD"/>
    </source>
</evidence>
<evidence type="ECO:0007744" key="52">
    <source>
        <dbReference type="PDB" id="2ZBE"/>
    </source>
</evidence>
<evidence type="ECO:0007744" key="53">
    <source>
        <dbReference type="PDB" id="2ZBF"/>
    </source>
</evidence>
<evidence type="ECO:0007744" key="54">
    <source>
        <dbReference type="PDB" id="2ZBG"/>
    </source>
</evidence>
<evidence type="ECO:0007744" key="55">
    <source>
        <dbReference type="PDB" id="3AR2"/>
    </source>
</evidence>
<evidence type="ECO:0007744" key="56">
    <source>
        <dbReference type="PDB" id="3AR3"/>
    </source>
</evidence>
<evidence type="ECO:0007744" key="57">
    <source>
        <dbReference type="PDB" id="3AR4"/>
    </source>
</evidence>
<evidence type="ECO:0007744" key="58">
    <source>
        <dbReference type="PDB" id="3AR5"/>
    </source>
</evidence>
<evidence type="ECO:0007744" key="59">
    <source>
        <dbReference type="PDB" id="3AR6"/>
    </source>
</evidence>
<evidence type="ECO:0007744" key="60">
    <source>
        <dbReference type="PDB" id="3AR7"/>
    </source>
</evidence>
<evidence type="ECO:0007744" key="61">
    <source>
        <dbReference type="PDB" id="3AR8"/>
    </source>
</evidence>
<evidence type="ECO:0007744" key="62">
    <source>
        <dbReference type="PDB" id="3AR9"/>
    </source>
</evidence>
<evidence type="ECO:0007744" key="63">
    <source>
        <dbReference type="PDB" id="3B9B"/>
    </source>
</evidence>
<evidence type="ECO:0007744" key="64">
    <source>
        <dbReference type="PDB" id="3B9R"/>
    </source>
</evidence>
<evidence type="ECO:0007744" key="65">
    <source>
        <dbReference type="PDB" id="3BA6"/>
    </source>
</evidence>
<evidence type="ECO:0007744" key="66">
    <source>
        <dbReference type="PDB" id="3FGO"/>
    </source>
</evidence>
<evidence type="ECO:0007744" key="67">
    <source>
        <dbReference type="PDB" id="3FPB"/>
    </source>
</evidence>
<evidence type="ECO:0007744" key="68">
    <source>
        <dbReference type="PDB" id="3FPS"/>
    </source>
</evidence>
<evidence type="ECO:0007744" key="69">
    <source>
        <dbReference type="PDB" id="3J7T"/>
    </source>
</evidence>
<evidence type="ECO:0007744" key="70">
    <source>
        <dbReference type="PDB" id="3N5K"/>
    </source>
</evidence>
<evidence type="ECO:0007744" key="71">
    <source>
        <dbReference type="PDB" id="3N8G"/>
    </source>
</evidence>
<evidence type="ECO:0007744" key="72">
    <source>
        <dbReference type="PDB" id="3W5A"/>
    </source>
</evidence>
<evidence type="ECO:0007744" key="73">
    <source>
        <dbReference type="PDB" id="3W5B"/>
    </source>
</evidence>
<evidence type="ECO:0007744" key="74">
    <source>
        <dbReference type="PDB" id="3W5C"/>
    </source>
</evidence>
<evidence type="ECO:0007744" key="75">
    <source>
        <dbReference type="PDB" id="3W5D"/>
    </source>
</evidence>
<evidence type="ECO:0007744" key="76">
    <source>
        <dbReference type="PDB" id="4BEW"/>
    </source>
</evidence>
<evidence type="ECO:0007744" key="77">
    <source>
        <dbReference type="PDB" id="4H1W"/>
    </source>
</evidence>
<evidence type="ECO:0007744" key="78">
    <source>
        <dbReference type="PDB" id="4J2T"/>
    </source>
</evidence>
<evidence type="ECO:0007744" key="79">
    <source>
        <dbReference type="PDB" id="4KYT"/>
    </source>
</evidence>
<evidence type="ECO:0007744" key="80">
    <source>
        <dbReference type="PDB" id="4NAB"/>
    </source>
</evidence>
<evidence type="ECO:0007744" key="81">
    <source>
        <dbReference type="PDB" id="4UU0"/>
    </source>
</evidence>
<evidence type="ECO:0007744" key="82">
    <source>
        <dbReference type="PDB" id="4UU1"/>
    </source>
</evidence>
<evidence type="ECO:0007744" key="83">
    <source>
        <dbReference type="PDB" id="4XOU"/>
    </source>
</evidence>
<evidence type="ECO:0007744" key="84">
    <source>
        <dbReference type="PDB" id="4Y3U"/>
    </source>
</evidence>
<evidence type="ECO:0007744" key="85">
    <source>
        <dbReference type="PDB" id="4YCL"/>
    </source>
</evidence>
<evidence type="ECO:0007744" key="86">
    <source>
        <dbReference type="PDB" id="4YCM"/>
    </source>
</evidence>
<evidence type="ECO:0007744" key="87">
    <source>
        <dbReference type="PDB" id="4YCN"/>
    </source>
</evidence>
<evidence type="ECO:0007744" key="88">
    <source>
        <dbReference type="PDB" id="5A3Q"/>
    </source>
</evidence>
<evidence type="ECO:0007744" key="89">
    <source>
        <dbReference type="PDB" id="5A3R"/>
    </source>
</evidence>
<evidence type="ECO:0007744" key="90">
    <source>
        <dbReference type="PDB" id="5A3S"/>
    </source>
</evidence>
<evidence type="ECO:0007744" key="91">
    <source>
        <dbReference type="PDB" id="5XA7"/>
    </source>
</evidence>
<evidence type="ECO:0007744" key="92">
    <source>
        <dbReference type="PDB" id="5XA8"/>
    </source>
</evidence>
<evidence type="ECO:0007744" key="93">
    <source>
        <dbReference type="PDB" id="5XA9"/>
    </source>
</evidence>
<evidence type="ECO:0007744" key="94">
    <source>
        <dbReference type="PDB" id="5XAA"/>
    </source>
</evidence>
<evidence type="ECO:0007744" key="95">
    <source>
        <dbReference type="PDB" id="5XAB"/>
    </source>
</evidence>
<evidence type="ECO:0007744" key="96">
    <source>
        <dbReference type="PDB" id="5ZMV"/>
    </source>
</evidence>
<evidence type="ECO:0007829" key="97">
    <source>
        <dbReference type="PDB" id="1SU4"/>
    </source>
</evidence>
<evidence type="ECO:0007829" key="98">
    <source>
        <dbReference type="PDB" id="1WPG"/>
    </source>
</evidence>
<evidence type="ECO:0007829" key="99">
    <source>
        <dbReference type="PDB" id="2EAU"/>
    </source>
</evidence>
<evidence type="ECO:0007829" key="100">
    <source>
        <dbReference type="PDB" id="2ZBD"/>
    </source>
</evidence>
<evidence type="ECO:0007829" key="101">
    <source>
        <dbReference type="PDB" id="2ZBG"/>
    </source>
</evidence>
<evidence type="ECO:0007829" key="102">
    <source>
        <dbReference type="PDB" id="3AR3"/>
    </source>
</evidence>
<evidence type="ECO:0007829" key="103">
    <source>
        <dbReference type="PDB" id="3AR4"/>
    </source>
</evidence>
<evidence type="ECO:0007829" key="104">
    <source>
        <dbReference type="PDB" id="3AR5"/>
    </source>
</evidence>
<evidence type="ECO:0007829" key="105">
    <source>
        <dbReference type="PDB" id="3AR7"/>
    </source>
</evidence>
<evidence type="ECO:0007829" key="106">
    <source>
        <dbReference type="PDB" id="3J7T"/>
    </source>
</evidence>
<evidence type="ECO:0007829" key="107">
    <source>
        <dbReference type="PDB" id="3N5K"/>
    </source>
</evidence>
<evidence type="ECO:0007829" key="108">
    <source>
        <dbReference type="PDB" id="3W5C"/>
    </source>
</evidence>
<evidence type="ECO:0007829" key="109">
    <source>
        <dbReference type="PDB" id="3W5D"/>
    </source>
</evidence>
<evidence type="ECO:0007829" key="110">
    <source>
        <dbReference type="PDB" id="4KYT"/>
    </source>
</evidence>
<evidence type="ECO:0007829" key="111">
    <source>
        <dbReference type="PDB" id="4YCN"/>
    </source>
</evidence>
<evidence type="ECO:0007829" key="112">
    <source>
        <dbReference type="PDB" id="5A3Q"/>
    </source>
</evidence>
<evidence type="ECO:0007829" key="113">
    <source>
        <dbReference type="PDB" id="5ZMW"/>
    </source>
</evidence>
<keyword id="KW-0002">3D-structure</keyword>
<keyword id="KW-0025">Alternative splicing</keyword>
<keyword id="KW-0067">ATP-binding</keyword>
<keyword id="KW-0106">Calcium</keyword>
<keyword id="KW-0109">Calcium transport</keyword>
<keyword id="KW-0903">Direct protein sequencing</keyword>
<keyword id="KW-1015">Disulfide bond</keyword>
<keyword id="KW-0256">Endoplasmic reticulum</keyword>
<keyword id="KW-0406">Ion transport</keyword>
<keyword id="KW-0460">Magnesium</keyword>
<keyword id="KW-0472">Membrane</keyword>
<keyword id="KW-0479">Metal-binding</keyword>
<keyword id="KW-0547">Nucleotide-binding</keyword>
<keyword id="KW-0597">Phosphoprotein</keyword>
<keyword id="KW-1185">Reference proteome</keyword>
<keyword id="KW-0703">Sarcoplasmic reticulum</keyword>
<keyword id="KW-1278">Translocase</keyword>
<keyword id="KW-0812">Transmembrane</keyword>
<keyword id="KW-1133">Transmembrane helix</keyword>
<keyword id="KW-0813">Transport</keyword>
<proteinExistence type="evidence at protein level"/>
<gene>
    <name type="primary">ATP2A1</name>
</gene>
<sequence>MEAAHSKSTEECLAYFGVSETTGLTPDQVKRHLEKYGHNELPAEEGKSLWELVIEQFEDLLVRILLLAACISFVLAWFEEGEETITAFVEPFVILLILIANAIVGVWQERNAENAIEALKEYEPEMGKVYRADRKSVQRIKARDIVPGDIVEVAVGDKVPADIRILSIKSTTLRVDQSILTGESVSVIKHTEPVPDPRAVNQDKKNMLFSGTNIAAGKALGIVATTGVSTEIGKIRDQMAATEQDKTPLQQKLDEFGEQLSKVISLICVAVWLINIGHFNDPVHGGSWIRGAIYYFKIAVALAVAAIPEGLPAVITTCLALGTRRMAKKNAIVRSLPSVETLGCTSVICSDKTGTLTTNQMSVCKMFIIDKVDGDFCSLNEFSITGSTYAPEGEVLKNDKPIRSGQFDGLVELATICALCNDSSLDFNETKGVYEKVGEATETALTTLVEKMNVFNTEVRNLSKVERANACNSVIRQLMKKEFTLEFSRDRKSMSVYCSPAKSSRAAVGNKMFVKGAPEGVIDRCNYVRVGTTRVPMTGPVKEKILSVIKEWGTGRDTLRCLALATRDTPPKREEMVLDDSSRFMEYETDLTFVGVVGMLDPPRKEVMGSIQLCRDAGIRVIMITGDNKGTAIAICRRIGIFGENEEVADRAYTGREFDDLPLAEQREACRRACCFARVEPSHKSKIVEYLQSYDEITAMTGDGVNDAPALKKAEIGIAMGSGTAVAKTASEMVLADDNFSTIVAAVEEGRAIYNNMKQFIRYLISSNVGEVVCIFLTAALGLPEALIPVQLLWVNLVTDGLPATALGFNPPDLDIMDRPPRSPKEPLISGWLFFRYMAIGGYVGAATVGAAAWWFMYAEDGPGVTYHQLTHFMQCTEDHPHFEGLDCEIFEAPEPMTMALSVLVTIEMCNALNSLSENQSLMRMPPWVNIWLLGSICLSMSLHFLILYVDPLPMIFKLKALDLTQWLMVLKISLPVIGLDEILKFIARNYLEDPEDERRK</sequence>